<name>R1AB_BCHK9</name>
<gene>
    <name type="primary">rep</name>
    <name type="ORF">1a-1b</name>
</gene>
<organism>
    <name type="scientific">Bat coronavirus HKU9</name>
    <name type="common">BtCoV</name>
    <name type="synonym">BtCoV/HKU9</name>
    <dbReference type="NCBI Taxonomy" id="694006"/>
    <lineage>
        <taxon>Viruses</taxon>
        <taxon>Riboviria</taxon>
        <taxon>Orthornavirae</taxon>
        <taxon>Pisuviricota</taxon>
        <taxon>Pisoniviricetes</taxon>
        <taxon>Nidovirales</taxon>
        <taxon>Cornidovirineae</taxon>
        <taxon>Coronaviridae</taxon>
        <taxon>Orthocoronavirinae</taxon>
        <taxon>Betacoronavirus</taxon>
        <taxon>Nobecovirus</taxon>
    </lineage>
</organism>
<organismHost>
    <name type="scientific">Rousettus leschenaultii</name>
    <name type="common">Leschenault's rousette</name>
    <name type="synonym">Pteropus leschenaultii</name>
    <dbReference type="NCBI Taxonomy" id="9408"/>
</organismHost>
<comment type="function">
    <text evidence="2">The replicase polyprotein of coronaviruses is a multifunctional protein: it contains the activities necessary for the transcription of negative stranded RNA, leader RNA, subgenomic mRNAs and progeny virion RNA as well as proteinases responsible for the cleavage of the polyprotein into functional products.</text>
</comment>
<comment type="function">
    <molecule>Host translation inhibitor nsp1</molecule>
    <text evidence="2 36">Inhibits host translation by interacting with the 40S ribosomal subunit. The nsp1-40S ribosome complex further induces an endonucleolytic cleavage near the 5'UTR of host mRNAs, targeting them for degradation. Viral mRNAs are not susceptible to nsp1-mediated endonucleolytic RNA cleavage thanks to the presence of a 5'-end leader sequence and are therefore protected from degradation. By suppressing host gene expression, nsp1 facilitates efficient viral gene expression in infected cells and evasion from host immune response.</text>
</comment>
<comment type="function">
    <molecule>Non-structural protein 2</molecule>
    <text evidence="2">May play a role in the modulation of host cell survival signaling pathway by interacting with host PHB and PHB2. Indeed, these two proteins play a role in maintaining the functional integrity of the mitochondria and protecting cells from various stresses.</text>
</comment>
<comment type="function">
    <molecule>Papain-like proteinase nsp3</molecule>
    <text evidence="2">Responsible for the cleavages located at the N-terminus of the replicase polyprotein. In addition, PL-PRO possesses a deubiquitinating/deISGylating activity and processes both 'Lys-48'- and 'Lys-63'-linked polyubiquitin chains from cellular substrates. Participates together with nsp4 in the assembly of virally-induced cytoplasmic double-membrane vesicles necessary for viral replication. Antagonizes innate immune induction of type I interferon by blocking the phosphorylation, dimerization and subsequent nuclear translocation of host IRF3. Also prevents host NF-kappa-B signaling.</text>
</comment>
<comment type="function">
    <molecule>Non-structural protein 4</molecule>
    <text evidence="2">Participates in the assembly of virally-induced cytoplasmic double-membrane vesicles necessary for viral replication.</text>
</comment>
<comment type="function">
    <molecule>3C-like proteinase nsp5</molecule>
    <text evidence="2 9">Cleaves the C-terminus of replicase polyprotein at 11 sites. Recognizes substrates containing the core sequence [ILMVF]-Q-|-[SGACN]. Also able to bind an ADP-ribose-1''-phosphate (ADRP).</text>
</comment>
<comment type="function">
    <molecule>Non-structural protein 6</molecule>
    <text evidence="2">Plays a role in the initial induction of autophagosomes from host endoplasmic reticulum. Later, limits the expansion of these phagosomes that are no longer able to deliver viral components to lysosomes.</text>
</comment>
<comment type="function">
    <molecule>Non-structural protein 7</molecule>
    <text evidence="2">Forms a hexadecamer with nsp8 (8 subunits of each) that may participate in viral replication by acting as a primase. Alternatively, may synthesize substantially longer products than oligonucleotide primers.</text>
</comment>
<comment type="function">
    <molecule>Non-structural protein 8</molecule>
    <text evidence="2">Forms a hexadecamer with nsp7 (8 subunits of each) that may participate in viral replication by acting as a primase. Alternatively, may synthesize substantially longer products than oligonucleotide primers.</text>
</comment>
<comment type="function">
    <molecule>Viral protein genome-linked nsp9</molecule>
    <text evidence="3">Forms a primer, NSP9-pU, which is utilized by the polymerase for the initiation of RNA chains. Interacts with ribosome signal recognition particle RNA (SRP). Together with NSP8, suppress protein integration into the cell membrane, thereby disrupting host immune defenses.</text>
</comment>
<comment type="function">
    <molecule>Non-structural protein 10</molecule>
    <text evidence="2">Plays a pivotal role in viral transcription by stimulating both nsp14 3'-5' exoribonuclease and nsp16 2'-O-methyltransferase activities. Therefore plays an essential role in viral mRNAs cap methylation.</text>
</comment>
<comment type="function">
    <molecule>RNA-directed RNA polymerase nsp12</molecule>
    <text evidence="3">RNA-directed RNA polymerase that catalyzes the transcription of viral genomic and subgenomic RNAs. Acts in complex with nsp7 and nsp8 to transcribe both the minus and positive strands of genomic RNA. The kinase-like NiRAN domain of NSP12 attaches one or more nucleotides to the amino terminus of NSP9, forming a covalent RNA-protein intermediate that serves as transcription/replication primer. Subgenomic RNAs (sgRNAs) are formed by discontinuous transcription: The polymerase has the ability to pause at transcription-regulating sequences (TRS) and jump to the leader TRS, resulting in a major deletion. This creates a series of subgenomic RNAs that are replicated, transcribed and translated. In addition, Nsp12 is a subunit of the viral RNA capping enzyme that catalyzes the RNA guanylyltransferase reaction for genomic and sub-genomic RNAs. Subsequently, the NiRAN domain transfers RNA to GDP, and forms the core cap structure GpppA-RNA.</text>
</comment>
<comment type="function">
    <molecule>Helicase nsp13</molecule>
    <text evidence="2">Multi-functional protein with a zinc-binding domain in N-terminus displaying RNA and DNA duplex-unwinding activities with 5' to 3' polarity. Activity of helicase is dependent on magnesium.</text>
</comment>
<comment type="function">
    <molecule>Guanine-N7 methyltransferase nsp14</molecule>
    <text evidence="2">Plays a role in viral RNA synthesis through two distinct activities. The N7-guanine methyltransferase activity plays a role in the formation of the cap structure GpppA-RNA. The proofreading exoribonuclease reduces the sensitivity of the virus to RNA mutagens during replication. This activity acts on both ssRNA and dsRNA in a 3'-5' direction.</text>
</comment>
<comment type="function">
    <molecule>Uridylate-specific endoribonuclease nsp15</molecule>
    <text evidence="2">Plays a role in viral transcription/replication and prevents the simultaneous activation of host cell dsRNA sensors, such as MDA5/IFIH1, OAS, and PKR (By similarity). Acts by degrading the 5'-polyuridines generated during replication of the poly(A) region of viral genomic and subgenomic RNAs. Catalyzes a two-step reaction in which a 2'3'-cyclic phosphate (2'3'-cP) is first generated by 2'-O transesterification, which is then hydrolyzed to a 3'-phosphate (3'-P) (By similarity). If not degraded, poly(U) RNA would hybridize with poly(A) RNA tails and activate host dsRNA sensors (By similarity).</text>
</comment>
<comment type="function">
    <molecule>2'-O-methyltransferase nsp16</molecule>
    <text evidence="2">Methyltransferase that mediates mRNA cap 2'-O-ribose methylation to the 5'-cap structure of viral mRNAs. N7-methyl guanosine cap is a prerequisite for binding of nsp16. Therefore plays an essential role in viral mRNAs cap methylation which is essential to evade immune system.</text>
</comment>
<comment type="catalytic activity">
    <molecule>RNA-directed RNA polymerase nsp12</molecule>
    <reaction evidence="8">
        <text>RNA(n) + a ribonucleoside 5'-triphosphate = RNA(n+1) + diphosphate</text>
        <dbReference type="Rhea" id="RHEA:21248"/>
        <dbReference type="Rhea" id="RHEA-COMP:14527"/>
        <dbReference type="Rhea" id="RHEA-COMP:17342"/>
        <dbReference type="ChEBI" id="CHEBI:33019"/>
        <dbReference type="ChEBI" id="CHEBI:61557"/>
        <dbReference type="ChEBI" id="CHEBI:140395"/>
        <dbReference type="EC" id="2.7.7.48"/>
    </reaction>
</comment>
<comment type="catalytic activity">
    <molecule>Helicase nsp13</molecule>
    <reaction>
        <text>ATP + H2O = ADP + phosphate + H(+)</text>
        <dbReference type="Rhea" id="RHEA:13065"/>
        <dbReference type="ChEBI" id="CHEBI:15377"/>
        <dbReference type="ChEBI" id="CHEBI:15378"/>
        <dbReference type="ChEBI" id="CHEBI:30616"/>
        <dbReference type="ChEBI" id="CHEBI:43474"/>
        <dbReference type="ChEBI" id="CHEBI:456216"/>
        <dbReference type="EC" id="3.6.4.12"/>
    </reaction>
</comment>
<comment type="catalytic activity">
    <molecule>Helicase nsp13</molecule>
    <reaction>
        <text>ATP + H2O = ADP + phosphate + H(+)</text>
        <dbReference type="Rhea" id="RHEA:13065"/>
        <dbReference type="ChEBI" id="CHEBI:15377"/>
        <dbReference type="ChEBI" id="CHEBI:15378"/>
        <dbReference type="ChEBI" id="CHEBI:30616"/>
        <dbReference type="ChEBI" id="CHEBI:43474"/>
        <dbReference type="ChEBI" id="CHEBI:456216"/>
        <dbReference type="EC" id="3.6.4.13"/>
    </reaction>
</comment>
<comment type="catalytic activity">
    <molecule>Papain-like proteinase nsp3</molecule>
    <reaction>
        <text>Thiol-dependent hydrolysis of ester, thioester, amide, peptide and isopeptide bonds formed by the C-terminal Gly of ubiquitin (a 76-residue protein attached to proteins as an intracellular targeting signal).</text>
        <dbReference type="EC" id="3.4.19.12"/>
    </reaction>
</comment>
<comment type="catalytic activity">
    <molecule>2'-O-methyltransferase nsp16</molecule>
    <reaction evidence="2">
        <text>a 5'-end (N(7)-methyl 5'-triphosphoguanosine)-ribonucleoside in mRNA + S-adenosyl-L-methionine = a 5'-end (N(7)-methyl 5'-triphosphoguanosine)-(2'-O-methyl-ribonucleoside) in mRNA + S-adenosyl-L-homocysteine + H(+)</text>
        <dbReference type="Rhea" id="RHEA:67020"/>
        <dbReference type="Rhea" id="RHEA-COMP:17167"/>
        <dbReference type="Rhea" id="RHEA-COMP:17168"/>
        <dbReference type="ChEBI" id="CHEBI:15378"/>
        <dbReference type="ChEBI" id="CHEBI:57856"/>
        <dbReference type="ChEBI" id="CHEBI:59789"/>
        <dbReference type="ChEBI" id="CHEBI:156461"/>
        <dbReference type="ChEBI" id="CHEBI:167609"/>
        <dbReference type="EC" id="2.1.1.57"/>
    </reaction>
</comment>
<comment type="catalytic activity">
    <molecule>Uridylate-specific endoribonuclease nsp15</molecule>
    <reaction evidence="2">
        <text>uridylyl-uridylyl-ribonucleotide-RNA = a 3'-end uridylyl-2',3'-cyclophospho-uridine-RNA + a 5'-end dephospho-ribonucleoside-RNA</text>
        <dbReference type="Rhea" id="RHEA:67732"/>
        <dbReference type="Rhea" id="RHEA-COMP:13936"/>
        <dbReference type="Rhea" id="RHEA-COMP:17334"/>
        <dbReference type="Rhea" id="RHEA-COMP:17335"/>
        <dbReference type="ChEBI" id="CHEBI:138284"/>
        <dbReference type="ChEBI" id="CHEBI:173079"/>
        <dbReference type="ChEBI" id="CHEBI:173080"/>
    </reaction>
</comment>
<comment type="catalytic activity">
    <molecule>RNA-directed RNA polymerase nsp12</molecule>
    <reaction evidence="3">
        <text>a 5'-end diphospho-ribonucleoside in mRNA + GTP + H(+) = a 5'-end (5'-triphosphoguanosine)-ribonucleoside in mRNA + diphosphate</text>
        <dbReference type="Rhea" id="RHEA:67012"/>
        <dbReference type="Rhea" id="RHEA-COMP:17165"/>
        <dbReference type="Rhea" id="RHEA-COMP:17166"/>
        <dbReference type="ChEBI" id="CHEBI:15378"/>
        <dbReference type="ChEBI" id="CHEBI:33019"/>
        <dbReference type="ChEBI" id="CHEBI:37565"/>
        <dbReference type="ChEBI" id="CHEBI:167616"/>
        <dbReference type="ChEBI" id="CHEBI:167617"/>
        <dbReference type="EC" id="2.7.7.50"/>
    </reaction>
    <physiologicalReaction direction="left-to-right" evidence="3">
        <dbReference type="Rhea" id="RHEA:67013"/>
    </physiologicalReaction>
</comment>
<comment type="catalytic activity">
    <molecule>Guanine-N7 methyltransferase nsp14</molecule>
    <reaction evidence="2">
        <text>a 5'-end (5'-triphosphoguanosine)-ribonucleoside in mRNA + S-adenosyl-L-methionine = a 5'-end (N(7)-methyl 5'-triphosphoguanosine)-ribonucleoside in mRNA + S-adenosyl-L-homocysteine</text>
        <dbReference type="Rhea" id="RHEA:67008"/>
        <dbReference type="Rhea" id="RHEA-COMP:17166"/>
        <dbReference type="Rhea" id="RHEA-COMP:17167"/>
        <dbReference type="ChEBI" id="CHEBI:57856"/>
        <dbReference type="ChEBI" id="CHEBI:59789"/>
        <dbReference type="ChEBI" id="CHEBI:156461"/>
        <dbReference type="ChEBI" id="CHEBI:167617"/>
        <dbReference type="EC" id="2.1.1.56"/>
    </reaction>
    <physiologicalReaction direction="left-to-right" evidence="2">
        <dbReference type="Rhea" id="RHEA:67009"/>
    </physiologicalReaction>
</comment>
<comment type="cofactor">
    <molecule>Uridylate-specific endoribonuclease nsp15</molecule>
    <cofactor evidence="2">
        <name>Mn(2+)</name>
        <dbReference type="ChEBI" id="CHEBI:29035"/>
    </cofactor>
    <text evidence="2">Likely affects Nsp15 binding to RNA.</text>
</comment>
<comment type="cofactor">
    <molecule>RNA-directed RNA polymerase nsp12</molecule>
    <cofactor evidence="3">
        <name>Mg(2+)</name>
        <dbReference type="ChEBI" id="CHEBI:18420"/>
    </cofactor>
</comment>
<comment type="subunit">
    <molecule>Non-structural protein 2</molecule>
    <text evidence="2">Interacts with host PHB and PHB2.</text>
</comment>
<comment type="subunit">
    <molecule>Non-structural protein 4</molecule>
    <text evidence="2">Interacts with papain-like protease nsp3 and non-structural protein 6.</text>
</comment>
<comment type="subunit">
    <molecule>3C-like proteinase nsp5</molecule>
    <text evidence="2">Monomer. Homodimer. Only the homodimer shows catalytic activity.</text>
</comment>
<comment type="subunit">
    <molecule>Non-structural protein 7</molecule>
    <text evidence="3">Interacts with nsp8 and nsp12 to form the replication-transcription complex (RTC): nsp12, nsp7, two subunits of nsp8, and up to two subunits of nsp13.</text>
</comment>
<comment type="subunit">
    <molecule>Non-structural protein 8</molecule>
    <text evidence="3">Interacts with nsp7, nsp13 and nsp12 to form the replication-transcription complex (RTC): nsp12, nsp7, two subunits of nsp8, and up to two subunits of nsp13.</text>
</comment>
<comment type="subunit">
    <molecule>Viral protein genome-linked nsp9</molecule>
    <text evidence="3">Interacts with nsp12.</text>
</comment>
<comment type="subunit">
    <molecule>Non-structural protein 10</molecule>
    <text evidence="3">Interacts with proofreading exoribonuclease nsp14 and 2'-O-methyltransferase nsp16; these interactions enhance nsp14 and nsp16 enzymatic activities.</text>
</comment>
<comment type="subunit">
    <molecule>RNA-directed RNA polymerase nsp12</molecule>
    <text evidence="3">Interacts with nsp7 and nsp8 to form the replication-transcription complex (RTC): nsp12, nsp7, two subunits of nsp8, and up to two subunits of nsp13. Interacts with nsp9.</text>
</comment>
<comment type="subunit">
    <molecule>Helicase nsp13</molecule>
    <text evidence="3">Interacts with nsp8 to form the replication-transcription complex (RTC): nsp12, nsp7, two subunits of nsp8, and up to two subunits of nsp13.</text>
</comment>
<comment type="subcellular location">
    <molecule>Papain-like proteinase nsp3</molecule>
    <subcellularLocation>
        <location>Host membrane</location>
        <topology>Multi-pass membrane protein</topology>
    </subcellularLocation>
    <subcellularLocation>
        <location evidence="2">Host cytoplasm</location>
    </subcellularLocation>
</comment>
<comment type="subcellular location">
    <molecule>Non-structural protein 4</molecule>
    <subcellularLocation>
        <location>Host membrane</location>
        <topology>Multi-pass membrane protein</topology>
    </subcellularLocation>
    <subcellularLocation>
        <location>Host cytoplasm</location>
    </subcellularLocation>
    <text evidence="2">Localizes in virally-induced cytoplasmic double-membrane vesicles.</text>
</comment>
<comment type="subcellular location">
    <molecule>Non-structural protein 6</molecule>
    <subcellularLocation>
        <location evidence="37">Host membrane</location>
        <topology evidence="37">Multi-pass membrane protein</topology>
    </subcellularLocation>
</comment>
<comment type="subcellular location">
    <molecule>Non-structural protein 7</molecule>
    <subcellularLocation>
        <location evidence="1">Host cytoplasm</location>
        <location evidence="1">Host perinuclear region</location>
    </subcellularLocation>
    <text evidence="1">nsp7, nsp8, nsp9 and nsp10 are localized in cytoplasmic foci, largely perinuclear. Late in infection, they merge into confluent complexes (By similarity).</text>
</comment>
<comment type="subcellular location">
    <molecule>Non-structural protein 8</molecule>
    <subcellularLocation>
        <location evidence="1">Host cytoplasm</location>
        <location evidence="1">Host perinuclear region</location>
    </subcellularLocation>
    <text evidence="1">nsp7, nsp8, nsp9 and nsp10 are localized in cytoplasmic foci, largely perinuclear. Late in infection, they merge into confluent complexes (By similarity).</text>
</comment>
<comment type="subcellular location">
    <molecule>Viral protein genome-linked nsp9</molecule>
    <subcellularLocation>
        <location evidence="1">Host cytoplasm</location>
        <location evidence="1">Host perinuclear region</location>
    </subcellularLocation>
    <text evidence="1">nsp7, nsp8, nsp9 and nsp10 are localized in cytoplasmic foci, largely perinuclear. Late in infection, they merge into confluent complexes (By similarity).</text>
</comment>
<comment type="subcellular location">
    <molecule>Non-structural protein 10</molecule>
    <subcellularLocation>
        <location evidence="1">Host cytoplasm</location>
        <location evidence="1">Host perinuclear region</location>
    </subcellularLocation>
    <text evidence="1">nsp7, nsp8, nsp9 and nsp10 are localized in cytoplasmic foci, largely perinuclear. Late in infection, they merge into confluent complexes (By similarity).</text>
</comment>
<comment type="subcellular location">
    <molecule>Helicase nsp13</molecule>
    <subcellularLocation>
        <location evidence="37">Host endoplasmic reticulum-Golgi intermediate compartment</location>
    </subcellularLocation>
    <text evidence="1">The helicase interacts with the N protein in membranous complexes and colocalizes with sites of synthesis of new viral RNA.</text>
</comment>
<comment type="subcellular location">
    <molecule>Uridylate-specific endoribonuclease nsp15</molecule>
    <subcellularLocation>
        <location evidence="1">Host cytoplasm</location>
        <location evidence="1">Host perinuclear region</location>
    </subcellularLocation>
</comment>
<comment type="alternative products">
    <event type="ribosomal frameshifting"/>
    <isoform>
        <id>P0C6W5-1</id>
        <name>Replicase polyprotein 1ab</name>
        <name>pp1ab</name>
        <sequence type="displayed"/>
    </isoform>
    <isoform>
        <id>P0C6T6-1</id>
        <name>Replicase polyprotein 1a</name>
        <name>pp1a</name>
        <name>ORF1a polyprotein</name>
        <sequence type="external"/>
    </isoform>
</comment>
<comment type="domain">
    <text evidence="1">The hydrophobic domains (HD) could mediate the membrane association of the replication complex and thereby alter the architecture of the host cell membrane.</text>
</comment>
<comment type="PTM">
    <text evidence="1">Specific enzymatic cleavages in vivo by its own proteases yield mature proteins. 3CL-PRO and PL-PRO proteinases are autocatalytically processed (By similarity).</text>
</comment>
<comment type="miscellaneous">
    <molecule>Isoform Replicase polyprotein 1ab</molecule>
    <text>Produced by -1 ribosomal frameshifting at the 1a-1b genes boundary.</text>
</comment>
<comment type="similarity">
    <text evidence="37">Belongs to the coronaviruses polyprotein 1ab family.</text>
</comment>
<keyword id="KW-0002">3D-structure</keyword>
<keyword id="KW-1072">Activation of host autophagy by virus</keyword>
<keyword id="KW-0067">ATP-binding</keyword>
<keyword id="KW-1132">Decay of host mRNAs by virus</keyword>
<keyword id="KW-1015">Disulfide bond</keyword>
<keyword id="KW-0255">Endonuclease</keyword>
<keyword id="KW-1262">Eukaryotic host gene expression shutoff by virus</keyword>
<keyword id="KW-1193">Eukaryotic host translation shutoff by virus</keyword>
<keyword id="KW-0269">Exonuclease</keyword>
<keyword id="KW-0347">Helicase</keyword>
<keyword id="KW-1035">Host cytoplasm</keyword>
<keyword id="KW-1190">Host gene expression shutoff by virus</keyword>
<keyword id="KW-1043">Host membrane</keyword>
<keyword id="KW-1192">Host mRNA suppression by virus</keyword>
<keyword id="KW-0945">Host-virus interaction</keyword>
<keyword id="KW-0378">Hydrolase</keyword>
<keyword id="KW-1090">Inhibition of host innate immune response by virus</keyword>
<keyword id="KW-1114">Inhibition of host interferon signaling pathway by virus</keyword>
<keyword id="KW-1095">Inhibition of host ISG15 by virus</keyword>
<keyword id="KW-1100">Inhibition of host NF-kappa-B by virus</keyword>
<keyword id="KW-0922">Interferon antiviral system evasion</keyword>
<keyword id="KW-0456">Lyase</keyword>
<keyword id="KW-0464">Manganese</keyword>
<keyword id="KW-0472">Membrane</keyword>
<keyword id="KW-0479">Metal-binding</keyword>
<keyword id="KW-0489">Methyltransferase</keyword>
<keyword id="KW-1127">Modulation of host ubiquitin pathway by viral deubiquitinase</keyword>
<keyword id="KW-1130">Modulation of host ubiquitin pathway by virus</keyword>
<keyword id="KW-0540">Nuclease</keyword>
<keyword id="KW-0547">Nucleotide-binding</keyword>
<keyword id="KW-0548">Nucleotidyltransferase</keyword>
<keyword id="KW-0645">Protease</keyword>
<keyword id="KW-1185">Reference proteome</keyword>
<keyword id="KW-0677">Repeat</keyword>
<keyword id="KW-0688">Ribosomal frameshifting</keyword>
<keyword id="KW-0694">RNA-binding</keyword>
<keyword id="KW-0696">RNA-directed RNA polymerase</keyword>
<keyword id="KW-0788">Thiol protease</keyword>
<keyword id="KW-0808">Transferase</keyword>
<keyword id="KW-0812">Transmembrane</keyword>
<keyword id="KW-1133">Transmembrane helix</keyword>
<keyword id="KW-0833">Ubl conjugation pathway</keyword>
<keyword id="KW-0899">Viral immunoevasion</keyword>
<keyword id="KW-0693">Viral RNA replication</keyword>
<keyword id="KW-0862">Zinc</keyword>
<keyword id="KW-0863">Zinc-finger</keyword>
<dbReference type="EC" id="3.4.19.12"/>
<dbReference type="EC" id="3.4.22.-"/>
<dbReference type="EC" id="2.7.7.48"/>
<dbReference type="EC" id="2.7.7.50"/>
<dbReference type="EC" id="3.6.4.12"/>
<dbReference type="EC" id="3.6.4.13"/>
<dbReference type="EC" id="2.1.1.56"/>
<dbReference type="EC" id="3.1.13.-"/>
<dbReference type="EC" id="4.6.1.-"/>
<dbReference type="EC" id="2.1.1.57"/>
<dbReference type="EMBL" id="EF065513">
    <property type="protein sequence ID" value="ABN10910.1"/>
    <property type="molecule type" value="Genomic_RNA"/>
</dbReference>
<dbReference type="RefSeq" id="YP_001039970.1">
    <molecule id="P0C6W5-1"/>
    <property type="nucleotide sequence ID" value="NC_009021.1"/>
</dbReference>
<dbReference type="PDB" id="5UTV">
    <property type="method" value="NMR"/>
    <property type="chains" value="A=1345-1418"/>
</dbReference>
<dbReference type="PDBsum" id="5UTV"/>
<dbReference type="SMR" id="P0C6W5"/>
<dbReference type="IntAct" id="P0C6W5">
    <property type="interactions" value="1"/>
</dbReference>
<dbReference type="BindingDB" id="P0C6W5"/>
<dbReference type="KEGG" id="vg:4836014"/>
<dbReference type="Proteomes" id="UP000006576">
    <property type="component" value="Genome"/>
</dbReference>
<dbReference type="GO" id="GO:0044172">
    <property type="term" value="C:host cell endoplasmic reticulum-Golgi intermediate compartment"/>
    <property type="evidence" value="ECO:0007669"/>
    <property type="project" value="UniProtKB-SubCell"/>
</dbReference>
<dbReference type="GO" id="GO:0033644">
    <property type="term" value="C:host cell membrane"/>
    <property type="evidence" value="ECO:0007669"/>
    <property type="project" value="UniProtKB-SubCell"/>
</dbReference>
<dbReference type="GO" id="GO:0044220">
    <property type="term" value="C:host cell perinuclear region of cytoplasm"/>
    <property type="evidence" value="ECO:0007669"/>
    <property type="project" value="UniProtKB-SubCell"/>
</dbReference>
<dbReference type="GO" id="GO:0016020">
    <property type="term" value="C:membrane"/>
    <property type="evidence" value="ECO:0007669"/>
    <property type="project" value="UniProtKB-KW"/>
</dbReference>
<dbReference type="GO" id="GO:0000175">
    <property type="term" value="F:3'-5'-RNA exonuclease activity"/>
    <property type="evidence" value="ECO:0007669"/>
    <property type="project" value="InterPro"/>
</dbReference>
<dbReference type="GO" id="GO:0043139">
    <property type="term" value="F:5'-3' DNA helicase activity"/>
    <property type="evidence" value="ECO:0007669"/>
    <property type="project" value="TreeGrafter"/>
</dbReference>
<dbReference type="GO" id="GO:0005524">
    <property type="term" value="F:ATP binding"/>
    <property type="evidence" value="ECO:0007669"/>
    <property type="project" value="UniProtKB-KW"/>
</dbReference>
<dbReference type="GO" id="GO:0016887">
    <property type="term" value="F:ATP hydrolysis activity"/>
    <property type="evidence" value="ECO:0007669"/>
    <property type="project" value="RHEA"/>
</dbReference>
<dbReference type="GO" id="GO:0004843">
    <property type="term" value="F:cysteine-type deubiquitinase activity"/>
    <property type="evidence" value="ECO:0007669"/>
    <property type="project" value="UniProtKB-EC"/>
</dbReference>
<dbReference type="GO" id="GO:0004197">
    <property type="term" value="F:cysteine-type endopeptidase activity"/>
    <property type="evidence" value="ECO:0007669"/>
    <property type="project" value="InterPro"/>
</dbReference>
<dbReference type="GO" id="GO:0004519">
    <property type="term" value="F:endonuclease activity"/>
    <property type="evidence" value="ECO:0007669"/>
    <property type="project" value="UniProtKB-KW"/>
</dbReference>
<dbReference type="GO" id="GO:0002151">
    <property type="term" value="F:G-quadruplex RNA binding"/>
    <property type="evidence" value="ECO:0007669"/>
    <property type="project" value="InterPro"/>
</dbReference>
<dbReference type="GO" id="GO:0016829">
    <property type="term" value="F:lyase activity"/>
    <property type="evidence" value="ECO:0007669"/>
    <property type="project" value="UniProtKB-KW"/>
</dbReference>
<dbReference type="GO" id="GO:0004483">
    <property type="term" value="F:mRNA (nucleoside-2'-O-)-methyltransferase activity"/>
    <property type="evidence" value="ECO:0007669"/>
    <property type="project" value="InterPro"/>
</dbReference>
<dbReference type="GO" id="GO:0004482">
    <property type="term" value="F:mRNA 5'-cap (guanine-N7-)-methyltransferase activity"/>
    <property type="evidence" value="ECO:0007669"/>
    <property type="project" value="InterPro"/>
</dbReference>
<dbReference type="GO" id="GO:0008242">
    <property type="term" value="F:omega peptidase activity"/>
    <property type="evidence" value="ECO:0007669"/>
    <property type="project" value="InterPro"/>
</dbReference>
<dbReference type="GO" id="GO:0003724">
    <property type="term" value="F:RNA helicase activity"/>
    <property type="evidence" value="ECO:0007669"/>
    <property type="project" value="UniProtKB-EC"/>
</dbReference>
<dbReference type="GO" id="GO:0003968">
    <property type="term" value="F:RNA-directed RNA polymerase activity"/>
    <property type="evidence" value="ECO:0007669"/>
    <property type="project" value="UniProtKB-KW"/>
</dbReference>
<dbReference type="GO" id="GO:0003727">
    <property type="term" value="F:single-stranded RNA binding"/>
    <property type="evidence" value="ECO:0007669"/>
    <property type="project" value="InterPro"/>
</dbReference>
<dbReference type="GO" id="GO:0008270">
    <property type="term" value="F:zinc ion binding"/>
    <property type="evidence" value="ECO:0007669"/>
    <property type="project" value="UniProtKB-KW"/>
</dbReference>
<dbReference type="GO" id="GO:0006351">
    <property type="term" value="P:DNA-templated transcription"/>
    <property type="evidence" value="ECO:0007669"/>
    <property type="project" value="InterPro"/>
</dbReference>
<dbReference type="GO" id="GO:0006508">
    <property type="term" value="P:proteolysis"/>
    <property type="evidence" value="ECO:0007669"/>
    <property type="project" value="UniProtKB-KW"/>
</dbReference>
<dbReference type="GO" id="GO:0010506">
    <property type="term" value="P:regulation of autophagy"/>
    <property type="evidence" value="ECO:0007669"/>
    <property type="project" value="InterPro"/>
</dbReference>
<dbReference type="GO" id="GO:0039520">
    <property type="term" value="P:symbiont-mediated activation of host autophagy"/>
    <property type="evidence" value="ECO:0007669"/>
    <property type="project" value="UniProtKB-KW"/>
</dbReference>
<dbReference type="GO" id="GO:0039595">
    <property type="term" value="P:symbiont-mediated degradation of host mRNA"/>
    <property type="evidence" value="ECO:0007669"/>
    <property type="project" value="UniProtKB-KW"/>
</dbReference>
<dbReference type="GO" id="GO:0039648">
    <property type="term" value="P:symbiont-mediated perturbation of host ubiquitin-like protein modification"/>
    <property type="evidence" value="ECO:0007669"/>
    <property type="project" value="UniProtKB-KW"/>
</dbReference>
<dbReference type="GO" id="GO:0039657">
    <property type="term" value="P:symbiont-mediated suppression of host gene expression"/>
    <property type="evidence" value="ECO:0007669"/>
    <property type="project" value="UniProtKB-KW"/>
</dbReference>
<dbReference type="GO" id="GO:0039579">
    <property type="term" value="P:symbiont-mediated suppression of host ISG15-protein conjugation"/>
    <property type="evidence" value="ECO:0007669"/>
    <property type="project" value="UniProtKB-KW"/>
</dbReference>
<dbReference type="GO" id="GO:0085034">
    <property type="term" value="P:symbiont-mediated suppression of host NF-kappaB cascade"/>
    <property type="evidence" value="ECO:0007669"/>
    <property type="project" value="UniProtKB-KW"/>
</dbReference>
<dbReference type="GO" id="GO:0039502">
    <property type="term" value="P:symbiont-mediated suppression of host type I interferon-mediated signaling pathway"/>
    <property type="evidence" value="ECO:0007669"/>
    <property type="project" value="UniProtKB-KW"/>
</dbReference>
<dbReference type="GO" id="GO:0019082">
    <property type="term" value="P:viral protein processing"/>
    <property type="evidence" value="ECO:0007669"/>
    <property type="project" value="InterPro"/>
</dbReference>
<dbReference type="GO" id="GO:0039694">
    <property type="term" value="P:viral RNA genome replication"/>
    <property type="evidence" value="ECO:0007669"/>
    <property type="project" value="InterPro"/>
</dbReference>
<dbReference type="GO" id="GO:0075523">
    <property type="term" value="P:viral translational frameshifting"/>
    <property type="evidence" value="ECO:0007669"/>
    <property type="project" value="UniProtKB-KW"/>
</dbReference>
<dbReference type="CDD" id="cd21409">
    <property type="entry name" value="1B_cv_Nsp13-like"/>
    <property type="match status" value="1"/>
</dbReference>
<dbReference type="CDD" id="cd21901">
    <property type="entry name" value="alpha_betaCoV_Nsp10"/>
    <property type="match status" value="1"/>
</dbReference>
<dbReference type="CDD" id="cd21596">
    <property type="entry name" value="batCoV-HKU9-like_RdRp"/>
    <property type="match status" value="1"/>
</dbReference>
<dbReference type="CDD" id="cd21560">
    <property type="entry name" value="betaCoV-Nsp6"/>
    <property type="match status" value="1"/>
</dbReference>
<dbReference type="CDD" id="cd21722">
    <property type="entry name" value="betaCoV_Nsp13-helicase"/>
    <property type="match status" value="1"/>
</dbReference>
<dbReference type="CDD" id="cd21659">
    <property type="entry name" value="betaCoV_Nsp14"/>
    <property type="match status" value="1"/>
</dbReference>
<dbReference type="CDD" id="cd21518">
    <property type="entry name" value="betaCoV_Nsp2_HKU9-like"/>
    <property type="match status" value="1"/>
</dbReference>
<dbReference type="CDD" id="cd21666">
    <property type="entry name" value="betaCoV_Nsp5_Mpro"/>
    <property type="match status" value="1"/>
</dbReference>
<dbReference type="CDD" id="cd21827">
    <property type="entry name" value="betaCoV_Nsp7"/>
    <property type="match status" value="1"/>
</dbReference>
<dbReference type="CDD" id="cd21831">
    <property type="entry name" value="betaCoV_Nsp8"/>
    <property type="match status" value="1"/>
</dbReference>
<dbReference type="CDD" id="cd21898">
    <property type="entry name" value="betaCoV_Nsp9"/>
    <property type="match status" value="1"/>
</dbReference>
<dbReference type="CDD" id="cd21732">
    <property type="entry name" value="betaCoV_PLPro"/>
    <property type="match status" value="1"/>
</dbReference>
<dbReference type="CDD" id="cd23528">
    <property type="entry name" value="capping_2-OMTase_betaCoV_Nsp16"/>
    <property type="match status" value="1"/>
</dbReference>
<dbReference type="CDD" id="cd21473">
    <property type="entry name" value="cv_Nsp4_TM"/>
    <property type="match status" value="1"/>
</dbReference>
<dbReference type="CDD" id="cd21877">
    <property type="entry name" value="HKU9-like_Nsp1"/>
    <property type="match status" value="1"/>
</dbReference>
<dbReference type="CDD" id="cd21813">
    <property type="entry name" value="HKU9-like_Nsp3_betaSM"/>
    <property type="match status" value="1"/>
</dbReference>
<dbReference type="CDD" id="cd21825">
    <property type="entry name" value="HKU9-like_Nsp3_NAB"/>
    <property type="match status" value="1"/>
</dbReference>
<dbReference type="CDD" id="cd21167">
    <property type="entry name" value="M_alpha_beta_cv_Nsp15-like"/>
    <property type="match status" value="1"/>
</dbReference>
<dbReference type="CDD" id="cd21563">
    <property type="entry name" value="Macro_cv_SUD-M_Nsp3-like"/>
    <property type="match status" value="1"/>
</dbReference>
<dbReference type="CDD" id="cd21557">
    <property type="entry name" value="Macro_X_Nsp3-like"/>
    <property type="match status" value="1"/>
</dbReference>
<dbReference type="CDD" id="cd21161">
    <property type="entry name" value="NendoU_cv_Nsp15-like"/>
    <property type="match status" value="1"/>
</dbReference>
<dbReference type="CDD" id="cd21171">
    <property type="entry name" value="NTD_alpha_betaCoV_Nsp15-like"/>
    <property type="match status" value="1"/>
</dbReference>
<dbReference type="CDD" id="cd21689">
    <property type="entry name" value="stalk_CoV_Nsp13-like"/>
    <property type="match status" value="1"/>
</dbReference>
<dbReference type="CDD" id="cd21537">
    <property type="entry name" value="SUD_C_HKU9_CoV_Nsp3"/>
    <property type="match status" value="1"/>
</dbReference>
<dbReference type="CDD" id="cd21715">
    <property type="entry name" value="TM_Y_HKU9-like_Nsp3_C"/>
    <property type="match status" value="1"/>
</dbReference>
<dbReference type="CDD" id="cd21467">
    <property type="entry name" value="Ubl1_cv_Nsp3_N-like"/>
    <property type="match status" value="1"/>
</dbReference>
<dbReference type="CDD" id="cd21401">
    <property type="entry name" value="ZBD_cv_Nsp13-like"/>
    <property type="match status" value="1"/>
</dbReference>
<dbReference type="Gene3D" id="1.10.8.1190">
    <property type="match status" value="1"/>
</dbReference>
<dbReference type="Gene3D" id="2.60.120.1680">
    <property type="match status" value="1"/>
</dbReference>
<dbReference type="Gene3D" id="3.10.20.350">
    <property type="match status" value="1"/>
</dbReference>
<dbReference type="Gene3D" id="3.10.20.540">
    <property type="match status" value="1"/>
</dbReference>
<dbReference type="Gene3D" id="3.40.50.11580">
    <property type="match status" value="1"/>
</dbReference>
<dbReference type="Gene3D" id="6.10.140.2090">
    <property type="match status" value="1"/>
</dbReference>
<dbReference type="Gene3D" id="1.10.150.420">
    <property type="entry name" value="Coronavirus nonstructural protein 4 C-terminus"/>
    <property type="match status" value="1"/>
</dbReference>
<dbReference type="Gene3D" id="3.40.220.10">
    <property type="entry name" value="Leucine Aminopeptidase, subunit E, domain 1"/>
    <property type="match status" value="1"/>
</dbReference>
<dbReference type="Gene3D" id="1.10.1840.10">
    <property type="entry name" value="main proteinase (3clpro) structure, domain 3"/>
    <property type="match status" value="1"/>
</dbReference>
<dbReference type="Gene3D" id="3.30.160.820">
    <property type="entry name" value="Nsp15 N-terminal domain-like"/>
    <property type="match status" value="1"/>
</dbReference>
<dbReference type="Gene3D" id="3.40.220.20">
    <property type="entry name" value="Nsp3, SUD-M subdomain"/>
    <property type="match status" value="1"/>
</dbReference>
<dbReference type="Gene3D" id="1.10.8.370">
    <property type="entry name" value="nsp7 replicase"/>
    <property type="match status" value="1"/>
</dbReference>
<dbReference type="Gene3D" id="3.30.70.3540">
    <property type="entry name" value="Nsp8 replicase, head domain"/>
    <property type="match status" value="1"/>
</dbReference>
<dbReference type="Gene3D" id="3.40.50.300">
    <property type="entry name" value="P-loop containing nucleotide triphosphate hydrolases"/>
    <property type="match status" value="2"/>
</dbReference>
<dbReference type="Gene3D" id="2.40.10.250">
    <property type="entry name" value="Replicase NSP9"/>
    <property type="match status" value="1"/>
</dbReference>
<dbReference type="Gene3D" id="3.40.50.11020">
    <property type="entry name" value="Replicase polyprotein, nucleic acid-binding domain"/>
    <property type="match status" value="1"/>
</dbReference>
<dbReference type="Gene3D" id="2.40.10.10">
    <property type="entry name" value="Trypsin-like serine proteases"/>
    <property type="match status" value="2"/>
</dbReference>
<dbReference type="Gene3D" id="3.40.50.150">
    <property type="entry name" value="Vaccinia Virus protein VP39"/>
    <property type="match status" value="1"/>
</dbReference>
<dbReference type="InterPro" id="IPR027351">
    <property type="entry name" value="(+)RNA_virus_helicase_core_dom"/>
</dbReference>
<dbReference type="InterPro" id="IPR046443">
    <property type="entry name" value="a/bCoV_NSP1_glob"/>
</dbReference>
<dbReference type="InterPro" id="IPR046440">
    <property type="entry name" value="AV_NSP11N_COV_NSP15M"/>
</dbReference>
<dbReference type="InterPro" id="IPR046442">
    <property type="entry name" value="bCoV_NSP1_C"/>
</dbReference>
<dbReference type="InterPro" id="IPR050534">
    <property type="entry name" value="Coronavir_polyprotein_1ab"/>
</dbReference>
<dbReference type="InterPro" id="IPR043608">
    <property type="entry name" value="CoV_NSP15_M"/>
</dbReference>
<dbReference type="InterPro" id="IPR043606">
    <property type="entry name" value="CoV_NSP15_N"/>
</dbReference>
<dbReference type="InterPro" id="IPR043613">
    <property type="entry name" value="CoV_NSP2_C"/>
</dbReference>
<dbReference type="InterPro" id="IPR047573">
    <property type="entry name" value="CoV_NSP2_M"/>
</dbReference>
<dbReference type="InterPro" id="IPR049894">
    <property type="entry name" value="COV_NSP3_3ECTO"/>
</dbReference>
<dbReference type="InterPro" id="IPR043611">
    <property type="entry name" value="CoV_NSP3_C"/>
</dbReference>
<dbReference type="InterPro" id="IPR047566">
    <property type="entry name" value="CoV_NSP3_Y"/>
</dbReference>
<dbReference type="InterPro" id="IPR032505">
    <property type="entry name" value="CoV_NSP4_C"/>
</dbReference>
<dbReference type="InterPro" id="IPR043612">
    <property type="entry name" value="CoV_NSP4_N"/>
</dbReference>
<dbReference type="InterPro" id="IPR043502">
    <property type="entry name" value="DNA/RNA_pol_sf"/>
</dbReference>
<dbReference type="InterPro" id="IPR041679">
    <property type="entry name" value="DNA2/NAM7-like_C"/>
</dbReference>
<dbReference type="InterPro" id="IPR022733">
    <property type="entry name" value="DPUP_SUD_C_bCoV"/>
</dbReference>
<dbReference type="InterPro" id="IPR037227">
    <property type="entry name" value="EndoU-like"/>
</dbReference>
<dbReference type="InterPro" id="IPR002589">
    <property type="entry name" value="Macro_dom"/>
</dbReference>
<dbReference type="InterPro" id="IPR043472">
    <property type="entry name" value="Macro_dom-like"/>
</dbReference>
<dbReference type="InterPro" id="IPR044371">
    <property type="entry name" value="Macro_X_NSP3-like"/>
</dbReference>
<dbReference type="InterPro" id="IPR046435">
    <property type="entry name" value="N7_MTase_CoV"/>
</dbReference>
<dbReference type="InterPro" id="IPR043609">
    <property type="entry name" value="NendoU_nidovirus"/>
</dbReference>
<dbReference type="InterPro" id="IPR044863">
    <property type="entry name" value="NIRAN"/>
</dbReference>
<dbReference type="InterPro" id="IPR046438">
    <property type="entry name" value="NIV_2_O_MTASE"/>
</dbReference>
<dbReference type="InterPro" id="IPR046436">
    <property type="entry name" value="NIV_EXON"/>
</dbReference>
<dbReference type="InterPro" id="IPR036333">
    <property type="entry name" value="NSP10_sf_CoV"/>
</dbReference>
<dbReference type="InterPro" id="IPR047570">
    <property type="entry name" value="NSP12_IF_CoV"/>
</dbReference>
<dbReference type="InterPro" id="IPR044343">
    <property type="entry name" value="NSP13_1B_dom_CoV"/>
</dbReference>
<dbReference type="InterPro" id="IPR048673">
    <property type="entry name" value="NSP13_stalk_CoV"/>
</dbReference>
<dbReference type="InterPro" id="IPR048672">
    <property type="entry name" value="NSP13_ZBD_CoV"/>
</dbReference>
<dbReference type="InterPro" id="IPR027352">
    <property type="entry name" value="NSP13_ZBD_CoV-like"/>
</dbReference>
<dbReference type="InterPro" id="IPR044315">
    <property type="entry name" value="NSP14_betaCoV"/>
</dbReference>
<dbReference type="InterPro" id="IPR009466">
    <property type="entry name" value="NSP14_CoV"/>
</dbReference>
<dbReference type="InterPro" id="IPR044330">
    <property type="entry name" value="NSP15_alpha_betaCoV_N"/>
</dbReference>
<dbReference type="InterPro" id="IPR044322">
    <property type="entry name" value="NSP15_M_alpha_beta_CoV"/>
</dbReference>
<dbReference type="InterPro" id="IPR043174">
    <property type="entry name" value="NSP15_middle_sf"/>
</dbReference>
<dbReference type="InterPro" id="IPR042515">
    <property type="entry name" value="NSP15_N_CoV"/>
</dbReference>
<dbReference type="InterPro" id="IPR044401">
    <property type="entry name" value="NSP15_NendoU_CoV"/>
</dbReference>
<dbReference type="InterPro" id="IPR009461">
    <property type="entry name" value="NSP16_CoV-like"/>
</dbReference>
<dbReference type="InterPro" id="IPR021590">
    <property type="entry name" value="NSP1_glob_bCoV"/>
</dbReference>
<dbReference type="InterPro" id="IPR044386">
    <property type="entry name" value="NSP2_HKU9-like"/>
</dbReference>
<dbReference type="InterPro" id="IPR043615">
    <property type="entry name" value="NSP2_N_CoV"/>
</dbReference>
<dbReference type="InterPro" id="IPR024375">
    <property type="entry name" value="NSP3_bCoV"/>
</dbReference>
<dbReference type="InterPro" id="IPR047567">
    <property type="entry name" value="NSP3_G2M_bCoV"/>
</dbReference>
<dbReference type="InterPro" id="IPR032592">
    <property type="entry name" value="NSP3_NAB_bCoV"/>
</dbReference>
<dbReference type="InterPro" id="IPR042570">
    <property type="entry name" value="NSP3_NAB_bCoV_sf"/>
</dbReference>
<dbReference type="InterPro" id="IPR038400">
    <property type="entry name" value="NSP3_SUD-M_sf_bCoV"/>
</dbReference>
<dbReference type="InterPro" id="IPR044352">
    <property type="entry name" value="Nsp3_SUD_C_HKU9_CoV"/>
</dbReference>
<dbReference type="InterPro" id="IPR044357">
    <property type="entry name" value="NSP3_Ubl1_dom_CoV"/>
</dbReference>
<dbReference type="InterPro" id="IPR044353">
    <property type="entry name" value="Nsp3_Ubl2_dom_CoV"/>
</dbReference>
<dbReference type="InterPro" id="IPR038083">
    <property type="entry name" value="NSP3A-like"/>
</dbReference>
<dbReference type="InterPro" id="IPR038123">
    <property type="entry name" value="NSP4_C_sf_CoV"/>
</dbReference>
<dbReference type="InterPro" id="IPR044367">
    <property type="entry name" value="NSP6_betaCoV"/>
</dbReference>
<dbReference type="InterPro" id="IPR043610">
    <property type="entry name" value="NSP6_CoV"/>
</dbReference>
<dbReference type="InterPro" id="IPR014828">
    <property type="entry name" value="NSP7_CoV"/>
</dbReference>
<dbReference type="InterPro" id="IPR037204">
    <property type="entry name" value="NSP7_sf_CoV"/>
</dbReference>
<dbReference type="InterPro" id="IPR014829">
    <property type="entry name" value="NSP8_CoV"/>
</dbReference>
<dbReference type="InterPro" id="IPR037230">
    <property type="entry name" value="NSP8_sf_CoV"/>
</dbReference>
<dbReference type="InterPro" id="IPR014822">
    <property type="entry name" value="NSP9_CoV"/>
</dbReference>
<dbReference type="InterPro" id="IPR036499">
    <property type="entry name" value="NSP9_sf_CoV"/>
</dbReference>
<dbReference type="InterPro" id="IPR027417">
    <property type="entry name" value="P-loop_NTPase"/>
</dbReference>
<dbReference type="InterPro" id="IPR013016">
    <property type="entry name" value="Peptidase_C16_CoV"/>
</dbReference>
<dbReference type="InterPro" id="IPR008740">
    <property type="entry name" value="Peptidase_C30_CoV"/>
</dbReference>
<dbReference type="InterPro" id="IPR043477">
    <property type="entry name" value="Peptidase_C30_dom3_CoV"/>
</dbReference>
<dbReference type="InterPro" id="IPR009003">
    <property type="entry name" value="Peptidase_S1_PA"/>
</dbReference>
<dbReference type="InterPro" id="IPR043504">
    <property type="entry name" value="Peptidase_S1_PA_chymotrypsin"/>
</dbReference>
<dbReference type="InterPro" id="IPR043177">
    <property type="entry name" value="PLpro_N_sf_CoV"/>
</dbReference>
<dbReference type="InterPro" id="IPR043503">
    <property type="entry name" value="PLpro_palm_finger_dom_CoV"/>
</dbReference>
<dbReference type="InterPro" id="IPR043178">
    <property type="entry name" value="PLpro_thumb_sf_CoV"/>
</dbReference>
<dbReference type="InterPro" id="IPR044349">
    <property type="entry name" value="RdRp_batCoV_HKU9-like"/>
</dbReference>
<dbReference type="InterPro" id="IPR046441">
    <property type="entry name" value="RdRp_CoV"/>
</dbReference>
<dbReference type="InterPro" id="IPR009469">
    <property type="entry name" value="RdRp_N_CoV"/>
</dbReference>
<dbReference type="InterPro" id="IPR001205">
    <property type="entry name" value="RNA-dir_pol_C"/>
</dbReference>
<dbReference type="InterPro" id="IPR007094">
    <property type="entry name" value="RNA-dir_pol_PSvirus"/>
</dbReference>
<dbReference type="InterPro" id="IPR018995">
    <property type="entry name" value="RNA_synth_NSP10_CoV"/>
</dbReference>
<dbReference type="InterPro" id="IPR029063">
    <property type="entry name" value="SAM-dependent_MTases_sf"/>
</dbReference>
<dbReference type="PANTHER" id="PTHR43788">
    <property type="entry name" value="DNA2/NAM7 HELICASE FAMILY MEMBER"/>
    <property type="match status" value="1"/>
</dbReference>
<dbReference type="PANTHER" id="PTHR43788:SF16">
    <property type="entry name" value="HELICASE WITH ZINC FINGER 2"/>
    <property type="match status" value="1"/>
</dbReference>
<dbReference type="Pfam" id="PF13087">
    <property type="entry name" value="AAA_12"/>
    <property type="match status" value="1"/>
</dbReference>
<dbReference type="Pfam" id="PF13604">
    <property type="entry name" value="AAA_30"/>
    <property type="match status" value="1"/>
</dbReference>
<dbReference type="Pfam" id="PF16251">
    <property type="entry name" value="bCoV_NAB"/>
    <property type="match status" value="1"/>
</dbReference>
<dbReference type="Pfam" id="PF11501">
    <property type="entry name" value="bCoV_NSP1"/>
    <property type="match status" value="1"/>
</dbReference>
<dbReference type="Pfam" id="PF11633">
    <property type="entry name" value="bCoV_SUD_M"/>
    <property type="match status" value="1"/>
</dbReference>
<dbReference type="Pfam" id="PF06471">
    <property type="entry name" value="CoV_ExoN"/>
    <property type="match status" value="1"/>
</dbReference>
<dbReference type="Pfam" id="PF06460">
    <property type="entry name" value="CoV_Methyltr_2"/>
    <property type="match status" value="1"/>
</dbReference>
<dbReference type="Pfam" id="PF09401">
    <property type="entry name" value="CoV_NSP10"/>
    <property type="match status" value="1"/>
</dbReference>
<dbReference type="Pfam" id="PF20631">
    <property type="entry name" value="CoV_NSP13_1B"/>
    <property type="match status" value="1"/>
</dbReference>
<dbReference type="Pfam" id="PF20633">
    <property type="entry name" value="CoV_NSP13_stalk"/>
    <property type="match status" value="1"/>
</dbReference>
<dbReference type="Pfam" id="PF20632">
    <property type="entry name" value="CoV_NSP13_ZBD"/>
    <property type="match status" value="1"/>
</dbReference>
<dbReference type="Pfam" id="PF19215">
    <property type="entry name" value="CoV_NSP15_C"/>
    <property type="match status" value="1"/>
</dbReference>
<dbReference type="Pfam" id="PF19216">
    <property type="entry name" value="CoV_NSP15_M"/>
    <property type="match status" value="1"/>
</dbReference>
<dbReference type="Pfam" id="PF19219">
    <property type="entry name" value="CoV_NSP15_N"/>
    <property type="match status" value="1"/>
</dbReference>
<dbReference type="Pfam" id="PF19212">
    <property type="entry name" value="CoV_NSP2_C"/>
    <property type="match status" value="1"/>
</dbReference>
<dbReference type="Pfam" id="PF19211">
    <property type="entry name" value="CoV_NSP2_N"/>
    <property type="match status" value="1"/>
</dbReference>
<dbReference type="Pfam" id="PF19218">
    <property type="entry name" value="CoV_NSP3_C"/>
    <property type="match status" value="1"/>
</dbReference>
<dbReference type="Pfam" id="PF16348">
    <property type="entry name" value="CoV_NSP4_C"/>
    <property type="match status" value="1"/>
</dbReference>
<dbReference type="Pfam" id="PF19217">
    <property type="entry name" value="CoV_NSP4_N"/>
    <property type="match status" value="1"/>
</dbReference>
<dbReference type="Pfam" id="PF19213">
    <property type="entry name" value="CoV_NSP6"/>
    <property type="match status" value="1"/>
</dbReference>
<dbReference type="Pfam" id="PF08716">
    <property type="entry name" value="CoV_NSP7"/>
    <property type="match status" value="1"/>
</dbReference>
<dbReference type="Pfam" id="PF08717">
    <property type="entry name" value="CoV_NSP8"/>
    <property type="match status" value="1"/>
</dbReference>
<dbReference type="Pfam" id="PF08710">
    <property type="entry name" value="CoV_NSP9"/>
    <property type="match status" value="1"/>
</dbReference>
<dbReference type="Pfam" id="PF08715">
    <property type="entry name" value="CoV_peptidase"/>
    <property type="match status" value="1"/>
</dbReference>
<dbReference type="Pfam" id="PF06478">
    <property type="entry name" value="CoV_RPol_N"/>
    <property type="match status" value="1"/>
</dbReference>
<dbReference type="Pfam" id="PF01661">
    <property type="entry name" value="Macro"/>
    <property type="match status" value="1"/>
</dbReference>
<dbReference type="Pfam" id="PF05409">
    <property type="entry name" value="Peptidase_C30"/>
    <property type="match status" value="1"/>
</dbReference>
<dbReference type="Pfam" id="PF00680">
    <property type="entry name" value="RdRP_1"/>
    <property type="match status" value="1"/>
</dbReference>
<dbReference type="SMART" id="SM00506">
    <property type="entry name" value="A1pp"/>
    <property type="match status" value="1"/>
</dbReference>
<dbReference type="SUPFAM" id="SSF144246">
    <property type="entry name" value="Coronavirus NSP10-like"/>
    <property type="match status" value="1"/>
</dbReference>
<dbReference type="SUPFAM" id="SSF140367">
    <property type="entry name" value="Coronavirus NSP7-like"/>
    <property type="match status" value="1"/>
</dbReference>
<dbReference type="SUPFAM" id="SSF143076">
    <property type="entry name" value="Coronavirus NSP8-like"/>
    <property type="match status" value="1"/>
</dbReference>
<dbReference type="SUPFAM" id="SSF56672">
    <property type="entry name" value="DNA/RNA polymerases"/>
    <property type="match status" value="1"/>
</dbReference>
<dbReference type="SUPFAM" id="SSF142877">
    <property type="entry name" value="EndoU-like"/>
    <property type="match status" value="1"/>
</dbReference>
<dbReference type="SUPFAM" id="SSF52949">
    <property type="entry name" value="Macro domain-like"/>
    <property type="match status" value="1"/>
</dbReference>
<dbReference type="SUPFAM" id="SSF159936">
    <property type="entry name" value="NSP3A-like"/>
    <property type="match status" value="1"/>
</dbReference>
<dbReference type="SUPFAM" id="SSF52540">
    <property type="entry name" value="P-loop containing nucleoside triphosphate hydrolases"/>
    <property type="match status" value="1"/>
</dbReference>
<dbReference type="SUPFAM" id="SSF101816">
    <property type="entry name" value="Replicase NSP9"/>
    <property type="match status" value="1"/>
</dbReference>
<dbReference type="SUPFAM" id="SSF53335">
    <property type="entry name" value="S-adenosyl-L-methionine-dependent methyltransferases"/>
    <property type="match status" value="1"/>
</dbReference>
<dbReference type="SUPFAM" id="SSF50494">
    <property type="entry name" value="Trypsin-like serine proteases"/>
    <property type="match status" value="1"/>
</dbReference>
<dbReference type="PROSITE" id="PS51961">
    <property type="entry name" value="AV_NSP11N_COV_NSP15M"/>
    <property type="match status" value="1"/>
</dbReference>
<dbReference type="PROSITE" id="PS51963">
    <property type="entry name" value="BCOV_NSP1_C"/>
    <property type="match status" value="1"/>
</dbReference>
<dbReference type="PROSITE" id="PS51942">
    <property type="entry name" value="BCOV_NSP3C_C"/>
    <property type="match status" value="1"/>
</dbReference>
<dbReference type="PROSITE" id="PS51941">
    <property type="entry name" value="BCOV_NSP3C_M"/>
    <property type="match status" value="1"/>
</dbReference>
<dbReference type="PROSITE" id="PS51994">
    <property type="entry name" value="BCOV_NSP3E_G2M"/>
    <property type="match status" value="1"/>
</dbReference>
<dbReference type="PROSITE" id="PS51945">
    <property type="entry name" value="BCOV_NSP3E_NAB"/>
    <property type="match status" value="1"/>
</dbReference>
<dbReference type="PROSITE" id="PS51993">
    <property type="entry name" value="COV_3ECTO"/>
    <property type="match status" value="1"/>
</dbReference>
<dbReference type="PROSITE" id="PS51952">
    <property type="entry name" value="COV_EXON_MTASE_COACT"/>
    <property type="match status" value="1"/>
</dbReference>
<dbReference type="PROSITE" id="PS51954">
    <property type="entry name" value="COV_N7_MTASE"/>
    <property type="match status" value="1"/>
</dbReference>
<dbReference type="PROSITE" id="PS51962">
    <property type="entry name" value="COV_NSP1"/>
    <property type="match status" value="1"/>
</dbReference>
<dbReference type="PROSITE" id="PS52000">
    <property type="entry name" value="COV_NSP12_IF"/>
    <property type="match status" value="1"/>
</dbReference>
<dbReference type="PROSITE" id="PS51948">
    <property type="entry name" value="COV_NSP12_RDRP"/>
    <property type="match status" value="1"/>
</dbReference>
<dbReference type="PROSITE" id="PS51960">
    <property type="entry name" value="COV_NSP15_NTD"/>
    <property type="match status" value="1"/>
</dbReference>
<dbReference type="PROSITE" id="PS51991">
    <property type="entry name" value="COV_NSP2_C"/>
    <property type="match status" value="1"/>
</dbReference>
<dbReference type="PROSITE" id="PS51990">
    <property type="entry name" value="COV_NSP2_M"/>
    <property type="match status" value="1"/>
</dbReference>
<dbReference type="PROSITE" id="PS51989">
    <property type="entry name" value="COV_NSP2_N"/>
    <property type="match status" value="1"/>
</dbReference>
<dbReference type="PROSITE" id="PS51992">
    <property type="entry name" value="COV_NSP3_Y"/>
    <property type="match status" value="1"/>
</dbReference>
<dbReference type="PROSITE" id="PS51943">
    <property type="entry name" value="COV_NSP3A_UBL"/>
    <property type="match status" value="1"/>
</dbReference>
<dbReference type="PROSITE" id="PS51944">
    <property type="entry name" value="COV_NSP3D_UBL"/>
    <property type="match status" value="1"/>
</dbReference>
<dbReference type="PROSITE" id="PS51946">
    <property type="entry name" value="COV_NSP4C"/>
    <property type="match status" value="1"/>
</dbReference>
<dbReference type="PROSITE" id="PS51949">
    <property type="entry name" value="COV_NSP7"/>
    <property type="match status" value="1"/>
</dbReference>
<dbReference type="PROSITE" id="PS51950">
    <property type="entry name" value="COV_NSP8"/>
    <property type="match status" value="1"/>
</dbReference>
<dbReference type="PROSITE" id="PS51951">
    <property type="entry name" value="COV_NSP9_SSRNA_BD"/>
    <property type="match status" value="1"/>
</dbReference>
<dbReference type="PROSITE" id="PS51653">
    <property type="entry name" value="CV_ZBD"/>
    <property type="match status" value="1"/>
</dbReference>
<dbReference type="PROSITE" id="PS51442">
    <property type="entry name" value="M_PRO"/>
    <property type="match status" value="1"/>
</dbReference>
<dbReference type="PROSITE" id="PS51154">
    <property type="entry name" value="MACRO"/>
    <property type="match status" value="1"/>
</dbReference>
<dbReference type="PROSITE" id="PS51958">
    <property type="entry name" value="NENDOU"/>
    <property type="match status" value="1"/>
</dbReference>
<dbReference type="PROSITE" id="PS51947">
    <property type="entry name" value="NIRAN"/>
    <property type="match status" value="1"/>
</dbReference>
<dbReference type="PROSITE" id="PS51955">
    <property type="entry name" value="NIV_2_O_MTASE"/>
    <property type="match status" value="1"/>
</dbReference>
<dbReference type="PROSITE" id="PS51953">
    <property type="entry name" value="NIV_EXON"/>
    <property type="match status" value="1"/>
</dbReference>
<dbReference type="PROSITE" id="PS51124">
    <property type="entry name" value="PEPTIDASE_C16"/>
    <property type="match status" value="1"/>
</dbReference>
<dbReference type="PROSITE" id="PS51657">
    <property type="entry name" value="PSRV_HELICASE"/>
    <property type="match status" value="1"/>
</dbReference>
<dbReference type="PROSITE" id="PS50507">
    <property type="entry name" value="RDRP_SSRNA_POS"/>
    <property type="match status" value="1"/>
</dbReference>
<accession>P0C6W5</accession>
<accession>A3EXG5</accession>
<reference key="1">
    <citation type="journal article" date="2007" name="J. Virol.">
        <title>Comparative analysis of twelve genomes of three novel group 2c and group 2d coronaviruses reveals unique group and subgroup features.</title>
        <authorList>
            <person name="Woo P.C.Y."/>
            <person name="Wang M."/>
            <person name="Lau S.K.P."/>
            <person name="Xu H.F."/>
            <person name="Poon R.W.S."/>
            <person name="Guo R."/>
            <person name="Wong B.H.L."/>
            <person name="Gao K."/>
            <person name="Tsoi H.-W."/>
            <person name="Huang Y."/>
            <person name="Li K.S.M."/>
            <person name="Lam C.S.F."/>
            <person name="Chan K.-H."/>
            <person name="Zheng B.-J."/>
            <person name="Yuen K.-Y."/>
        </authorList>
    </citation>
    <scope>NUCLEOTIDE SEQUENCE [GENOMIC RNA]</scope>
    <source>
        <strain>Isolate HKU9-1</strain>
    </source>
</reference>
<reference key="2">
    <citation type="journal article" date="2009" name="J. Virol.">
        <title>Suppression of host gene expression by nsp1 proteins of group 2 bat coronaviruses.</title>
        <authorList>
            <person name="Tohya Y."/>
            <person name="Narayanan K."/>
            <person name="Kamitani W."/>
            <person name="Huang C."/>
            <person name="Lokugamage K."/>
            <person name="Makino S."/>
        </authorList>
    </citation>
    <scope>FUNCTION OF NSP1</scope>
</reference>
<proteinExistence type="evidence at protein level"/>
<feature type="chain" id="PRO_0000291350" description="Host translation inhibitor nsp1" evidence="2">
    <location>
        <begin position="1"/>
        <end position="175"/>
    </location>
</feature>
<feature type="chain" id="PRO_0000291351" description="Non-structural protein 2" evidence="2">
    <location>
        <begin position="176"/>
        <end position="772"/>
    </location>
</feature>
<feature type="chain" id="PRO_0000291352" description="Papain-like proteinase nsp3" evidence="2">
    <location>
        <begin position="773"/>
        <end position="2609"/>
    </location>
</feature>
<feature type="chain" id="PRO_0000291353" description="Non-structural protein 4" evidence="2">
    <location>
        <begin position="2610"/>
        <end position="3103"/>
    </location>
</feature>
<feature type="chain" id="PRO_0000291354" description="3C-like proteinase nsp5" evidence="2">
    <location>
        <begin position="3104"/>
        <end position="3409"/>
    </location>
</feature>
<feature type="chain" id="PRO_0000291355" description="Non-structural protein 6" evidence="2">
    <location>
        <begin position="3410"/>
        <end position="3699"/>
    </location>
</feature>
<feature type="chain" id="PRO_0000291356" description="Non-structural protein 7" evidence="2">
    <location>
        <begin position="3700"/>
        <end position="3782"/>
    </location>
</feature>
<feature type="chain" id="PRO_0000291357" description="Non-structural protein 8" evidence="2">
    <location>
        <begin position="3783"/>
        <end position="3982"/>
    </location>
</feature>
<feature type="chain" id="PRO_0000291358" description="Viral protein genome-linked nsp9" evidence="2">
    <location>
        <begin position="3983"/>
        <end position="4094"/>
    </location>
</feature>
<feature type="chain" id="PRO_0000291359" description="Non-structural protein 10" evidence="2">
    <location>
        <begin position="4095"/>
        <end position="4233"/>
    </location>
</feature>
<feature type="chain" id="PRO_0000291360" description="RNA-directed RNA polymerase nsp12" evidence="2">
    <location>
        <begin position="4234"/>
        <end position="5165"/>
    </location>
</feature>
<feature type="chain" id="PRO_0000291361" description="Helicase nsp13" evidence="2">
    <location>
        <begin position="5166"/>
        <end position="5766"/>
    </location>
</feature>
<feature type="chain" id="PRO_0000291362" description="Guanine-N7 methyltransferase nsp14" evidence="2">
    <location>
        <begin position="5767"/>
        <end position="6296"/>
    </location>
</feature>
<feature type="chain" id="PRO_0000291363" description="Uridylate-specific endoribonuclease nsp15" evidence="2">
    <location>
        <begin position="6297"/>
        <end position="6633"/>
    </location>
</feature>
<feature type="chain" id="PRO_0000291364" description="2'-O-methyltransferase nsp16" evidence="2">
    <location>
        <begin position="6634"/>
        <end position="6930"/>
    </location>
</feature>
<feature type="transmembrane region" description="Helical" evidence="4">
    <location>
        <begin position="2015"/>
        <end position="2035"/>
    </location>
</feature>
<feature type="transmembrane region" description="Helical" evidence="4">
    <location>
        <begin position="2040"/>
        <end position="2060"/>
    </location>
</feature>
<feature type="transmembrane region" description="Helical" evidence="4">
    <location>
        <begin position="2081"/>
        <end position="2101"/>
    </location>
</feature>
<feature type="transmembrane region" description="Helical" evidence="4">
    <location>
        <begin position="2162"/>
        <end position="2182"/>
    </location>
</feature>
<feature type="transmembrane region" description="Helical" evidence="4">
    <location>
        <begin position="2183"/>
        <end position="2203"/>
    </location>
</feature>
<feature type="transmembrane region" description="Helical" evidence="4">
    <location>
        <begin position="2218"/>
        <end position="2238"/>
    </location>
</feature>
<feature type="transmembrane region" description="Helical" evidence="4">
    <location>
        <begin position="2621"/>
        <end position="2641"/>
    </location>
</feature>
<feature type="transmembrane region" description="Helical" evidence="4">
    <location>
        <begin position="2719"/>
        <end position="2739"/>
    </location>
</feature>
<feature type="transmembrane region" description="Helical" evidence="4">
    <location>
        <begin position="2865"/>
        <end position="2885"/>
    </location>
</feature>
<feature type="transmembrane region" description="Helical" evidence="4">
    <location>
        <begin position="2887"/>
        <end position="2907"/>
    </location>
</feature>
<feature type="transmembrane region" description="Helical" evidence="4">
    <location>
        <begin position="2916"/>
        <end position="2936"/>
    </location>
</feature>
<feature type="transmembrane region" description="Helical" evidence="4">
    <location>
        <begin position="2946"/>
        <end position="2966"/>
    </location>
</feature>
<feature type="transmembrane region" description="Helical" evidence="4">
    <location>
        <begin position="2970"/>
        <end position="2990"/>
    </location>
</feature>
<feature type="transmembrane region" description="Helical" evidence="4">
    <location>
        <begin position="3423"/>
        <end position="3443"/>
    </location>
</feature>
<feature type="transmembrane region" description="Helical" evidence="4">
    <location>
        <begin position="3449"/>
        <end position="3469"/>
    </location>
</feature>
<feature type="transmembrane region" description="Helical" evidence="4">
    <location>
        <begin position="3474"/>
        <end position="3494"/>
    </location>
</feature>
<feature type="transmembrane region" description="Helical" evidence="4">
    <location>
        <begin position="3517"/>
        <end position="3537"/>
    </location>
</feature>
<feature type="transmembrane region" description="Helical" evidence="4">
    <location>
        <begin position="3569"/>
        <end position="3589"/>
    </location>
</feature>
<feature type="transmembrane region" description="Helical" evidence="4">
    <location>
        <begin position="3592"/>
        <end position="3612"/>
    </location>
</feature>
<feature type="transmembrane region" description="Helical" evidence="4">
    <location>
        <begin position="3620"/>
        <end position="3640"/>
    </location>
</feature>
<feature type="domain" description="CoV Nsp1 globular" evidence="26">
    <location>
        <begin position="10"/>
        <end position="131"/>
    </location>
</feature>
<feature type="domain" description="BetaCoV Nsp1 C-terminal" evidence="27">
    <location>
        <begin position="149"/>
        <end position="175"/>
    </location>
</feature>
<feature type="domain" description="CoV Nsp2 N-terminal" evidence="28">
    <location>
        <begin position="177"/>
        <end position="431"/>
    </location>
</feature>
<feature type="domain" description="CoV Nsp2 middle" evidence="29">
    <location>
        <begin position="432"/>
        <end position="644"/>
    </location>
</feature>
<feature type="domain" description="CoV Nsp2 C-terminal" evidence="30">
    <location>
        <begin position="646"/>
        <end position="772"/>
    </location>
</feature>
<feature type="domain" description="Ubiquitin-like 1" evidence="5">
    <location>
        <begin position="775"/>
        <end position="885"/>
    </location>
</feature>
<feature type="domain" description="Macro 1" evidence="7">
    <location>
        <begin position="930"/>
        <end position="1097"/>
    </location>
</feature>
<feature type="domain" description="Macro 2" evidence="7">
    <location>
        <begin position="1216"/>
        <end position="1340"/>
    </location>
</feature>
<feature type="domain" description="DPUP" evidence="11">
    <location>
        <begin position="1345"/>
        <end position="1417"/>
    </location>
</feature>
<feature type="domain" description="Ubiquitin-like 2" evidence="5">
    <location>
        <begin position="1423"/>
        <end position="1478"/>
    </location>
</feature>
<feature type="domain" description="Peptidase C16" evidence="6">
    <location>
        <begin position="1492"/>
        <end position="1757"/>
    </location>
</feature>
<feature type="domain" description="Nucleic acid-binding" evidence="12">
    <location>
        <begin position="1770"/>
        <end position="1870"/>
    </location>
</feature>
<feature type="domain" description="G2M" evidence="33">
    <location>
        <begin position="1883"/>
        <end position="2012"/>
    </location>
</feature>
<feature type="domain" description="3Ecto" evidence="32">
    <location>
        <begin position="2105"/>
        <end position="2162"/>
    </location>
</feature>
<feature type="domain" description="CoV Nsp3 Y" evidence="31">
    <location>
        <begin position="2239"/>
        <end position="2610"/>
    </location>
</feature>
<feature type="domain" description="Nsp4C" evidence="13">
    <location>
        <begin position="3007"/>
        <end position="3103"/>
    </location>
</feature>
<feature type="domain" description="Peptidase C30" evidence="9">
    <location>
        <begin position="3104"/>
        <end position="3409"/>
    </location>
</feature>
<feature type="domain" description="RdRp Nsp7 cofactor" evidence="16">
    <location>
        <begin position="3700"/>
        <end position="3782"/>
    </location>
</feature>
<feature type="domain" description="RdRp Nsp8 cofactor" evidence="17">
    <location>
        <begin position="3783"/>
        <end position="3982"/>
    </location>
</feature>
<feature type="domain" description="Nsp9 ssRNA-binding" evidence="18">
    <location>
        <begin position="3983"/>
        <end position="4094"/>
    </location>
</feature>
<feature type="domain" description="ExoN/MTase coactivator" evidence="19">
    <location>
        <begin position="4095"/>
        <end position="4233"/>
    </location>
</feature>
<feature type="domain" description="NiRAN" evidence="14">
    <location>
        <begin position="4239"/>
        <end position="4494"/>
    </location>
</feature>
<feature type="domain" description="Nsp12 Interface" evidence="34">
    <location>
        <begin position="4499"/>
        <end position="4597"/>
    </location>
</feature>
<feature type="domain" description="Nsp12 RNA-dependent RNA polymerase" evidence="15">
    <location>
        <begin position="4598"/>
        <end position="5165"/>
    </location>
</feature>
<feature type="domain" description="RdRp catalytic" evidence="8">
    <location>
        <begin position="4845"/>
        <end position="5007"/>
    </location>
</feature>
<feature type="domain" description="CV ZBD" evidence="10">
    <location>
        <begin position="5166"/>
        <end position="5278"/>
    </location>
</feature>
<feature type="domain" description="(+)RNA virus helicase ATP-binding">
    <location>
        <begin position="5412"/>
        <end position="5603"/>
    </location>
</feature>
<feature type="domain" description="(+)RNA virus helicase C-terminal">
    <location>
        <begin position="5604"/>
        <end position="5778"/>
    </location>
</feature>
<feature type="domain" description="ExoN" evidence="20">
    <location>
        <begin position="5838"/>
        <end position="6056"/>
    </location>
</feature>
<feature type="domain" description="N7-MTase" evidence="21">
    <location>
        <begin position="6065"/>
        <end position="6296"/>
    </location>
</feature>
<feature type="domain" description="Nsp15 N-terminal oligomerization" evidence="24">
    <location>
        <begin position="6297"/>
        <end position="6357"/>
    </location>
</feature>
<feature type="domain" description="AV-Nsp11N/CoV-Nsp15M" evidence="25">
    <location>
        <begin position="6358"/>
        <end position="6476"/>
    </location>
</feature>
<feature type="domain" description="NendoU" evidence="23">
    <location>
        <begin position="6493"/>
        <end position="6630"/>
    </location>
</feature>
<feature type="domain" description="Nidovirus-type SAM-dependent 2'-O-MTase" evidence="22">
    <location>
        <begin position="6635"/>
        <end position="6928"/>
    </location>
</feature>
<feature type="zinc finger region" description="C4-type" evidence="6">
    <location>
        <begin position="1610"/>
        <end position="1647"/>
    </location>
</feature>
<feature type="zinc finger region" evidence="1">
    <location>
        <begin position="4168"/>
        <end position="4184"/>
    </location>
</feature>
<feature type="zinc finger region" evidence="1">
    <location>
        <begin position="4211"/>
        <end position="4224"/>
    </location>
</feature>
<feature type="region of interest" description="C4" evidence="28">
    <location>
        <begin position="312"/>
        <end position="333"/>
    </location>
</feature>
<feature type="region of interest" description="Disordered" evidence="35">
    <location>
        <begin position="1188"/>
        <end position="1207"/>
    </location>
</feature>
<feature type="region of interest" description="HD1" evidence="1">
    <location>
        <begin position="2015"/>
        <end position="2238"/>
    </location>
</feature>
<feature type="region of interest" description="Y1" evidence="31">
    <location>
        <begin position="2239"/>
        <end position="2329"/>
    </location>
</feature>
<feature type="region of interest" description="ZF1" evidence="31">
    <location>
        <begin position="2243"/>
        <end position="2256"/>
    </location>
</feature>
<feature type="region of interest" description="ZF2" evidence="31">
    <location>
        <begin position="2289"/>
        <end position="2299"/>
    </location>
</feature>
<feature type="region of interest" description="CoV-Y" evidence="31">
    <location>
        <begin position="2330"/>
        <end position="2610"/>
    </location>
</feature>
<feature type="region of interest" description="Y2" evidence="31">
    <location>
        <begin position="2330"/>
        <end position="2425"/>
    </location>
</feature>
<feature type="region of interest" description="Y3" evidence="31">
    <location>
        <begin position="2426"/>
        <end position="2509"/>
    </location>
</feature>
<feature type="region of interest" description="Y4" evidence="31">
    <location>
        <begin position="2510"/>
        <end position="2610"/>
    </location>
</feature>
<feature type="region of interest" description="HD2" evidence="1">
    <location>
        <begin position="2621"/>
        <end position="2990"/>
    </location>
</feature>
<feature type="region of interest" description="HD3" evidence="1">
    <location>
        <begin position="3423"/>
        <end position="3640"/>
    </location>
</feature>
<feature type="region of interest" description="RdRp Fingers N-ter" evidence="15">
    <location>
        <begin position="4600"/>
        <end position="4814"/>
    </location>
</feature>
<feature type="region of interest" description="RdRp Palm N-ter" evidence="15">
    <location>
        <begin position="4815"/>
        <end position="4853"/>
    </location>
</feature>
<feature type="region of interest" description="RdRp Fingers C-ter" evidence="15">
    <location>
        <begin position="4854"/>
        <end position="4912"/>
    </location>
</feature>
<feature type="region of interest" description="RdRp Palm C-ter" evidence="15">
    <location>
        <begin position="4913"/>
        <end position="5048"/>
    </location>
</feature>
<feature type="region of interest" description="RdRp Thumb" evidence="15">
    <location>
        <begin position="5049"/>
        <end position="5165"/>
    </location>
</feature>
<feature type="region of interest" description="GpppA-binding" evidence="21">
    <location>
        <begin position="6180"/>
        <end position="6194"/>
    </location>
</feature>
<feature type="compositionally biased region" description="Low complexity" evidence="35">
    <location>
        <begin position="1195"/>
        <end position="1206"/>
    </location>
</feature>
<feature type="active site" description="For PL-PRO activity" evidence="6">
    <location>
        <position position="1533"/>
    </location>
</feature>
<feature type="active site" description="For PL-PRO activity" evidence="6">
    <location>
        <position position="1694"/>
    </location>
</feature>
<feature type="active site" description="For PL-PRO activity" evidence="6">
    <location>
        <position position="1708"/>
    </location>
</feature>
<feature type="active site" description="For 3CL-PRO activity" evidence="9">
    <location>
        <position position="3144"/>
    </location>
</feature>
<feature type="active site" description="For 3CL-PRO activity" evidence="9">
    <location>
        <position position="3248"/>
    </location>
</feature>
<feature type="active site" evidence="15">
    <location>
        <position position="4992"/>
    </location>
</feature>
<feature type="active site" evidence="15">
    <location>
        <position position="4993"/>
    </location>
</feature>
<feature type="active site" evidence="15">
    <location>
        <position position="4994"/>
    </location>
</feature>
<feature type="active site" evidence="20">
    <location>
        <position position="5856"/>
    </location>
</feature>
<feature type="active site" evidence="20">
    <location>
        <position position="5858"/>
    </location>
</feature>
<feature type="active site" evidence="20">
    <location>
        <position position="5957"/>
    </location>
</feature>
<feature type="active site" evidence="20">
    <location>
        <position position="6037"/>
    </location>
</feature>
<feature type="active site" evidence="20">
    <location>
        <position position="6042"/>
    </location>
</feature>
<feature type="active site" evidence="23">
    <location>
        <position position="6523"/>
    </location>
</feature>
<feature type="active site" evidence="23">
    <location>
        <position position="6537"/>
    </location>
</feature>
<feature type="active site" evidence="23">
    <location>
        <position position="6576"/>
    </location>
</feature>
<feature type="active site" evidence="22">
    <location>
        <position position="6679"/>
    </location>
</feature>
<feature type="active site" evidence="22">
    <location>
        <position position="6763"/>
    </location>
</feature>
<feature type="active site" evidence="22">
    <location>
        <position position="6803"/>
    </location>
</feature>
<feature type="active site" evidence="22">
    <location>
        <position position="6836"/>
    </location>
</feature>
<feature type="binding site" evidence="28">
    <location>
        <position position="312"/>
    </location>
    <ligand>
        <name>Zn(2+)</name>
        <dbReference type="ChEBI" id="CHEBI:29105"/>
        <label>1</label>
    </ligand>
</feature>
<feature type="binding site" evidence="28">
    <location>
        <position position="315"/>
    </location>
    <ligand>
        <name>Zn(2+)</name>
        <dbReference type="ChEBI" id="CHEBI:29105"/>
        <label>1</label>
    </ligand>
</feature>
<feature type="binding site" evidence="28">
    <location>
        <position position="331"/>
    </location>
    <ligand>
        <name>Zn(2+)</name>
        <dbReference type="ChEBI" id="CHEBI:29105"/>
        <label>1</label>
    </ligand>
</feature>
<feature type="binding site" evidence="28">
    <location>
        <position position="333"/>
    </location>
    <ligand>
        <name>Zn(2+)</name>
        <dbReference type="ChEBI" id="CHEBI:29105"/>
        <label>1</label>
    </ligand>
</feature>
<feature type="binding site" evidence="6">
    <location>
        <position position="1610"/>
    </location>
    <ligand>
        <name>Zn(2+)</name>
        <dbReference type="ChEBI" id="CHEBI:29105"/>
        <label>2</label>
    </ligand>
</feature>
<feature type="binding site" evidence="6">
    <location>
        <position position="1613"/>
    </location>
    <ligand>
        <name>Zn(2+)</name>
        <dbReference type="ChEBI" id="CHEBI:29105"/>
        <label>2</label>
    </ligand>
</feature>
<feature type="binding site" evidence="6">
    <location>
        <position position="1645"/>
    </location>
    <ligand>
        <name>Zn(2+)</name>
        <dbReference type="ChEBI" id="CHEBI:29105"/>
        <label>2</label>
    </ligand>
</feature>
<feature type="binding site" evidence="6">
    <location>
        <position position="1647"/>
    </location>
    <ligand>
        <name>Zn(2+)</name>
        <dbReference type="ChEBI" id="CHEBI:29105"/>
        <label>2</label>
    </ligand>
</feature>
<feature type="binding site" evidence="31">
    <location>
        <position position="2243"/>
    </location>
    <ligand>
        <name>Zn(2+)</name>
        <dbReference type="ChEBI" id="CHEBI:29105"/>
        <label>3</label>
    </ligand>
</feature>
<feature type="binding site" evidence="31">
    <location>
        <position position="2248"/>
    </location>
    <ligand>
        <name>Zn(2+)</name>
        <dbReference type="ChEBI" id="CHEBI:29105"/>
        <label>3</label>
    </ligand>
</feature>
<feature type="binding site" evidence="31">
    <location>
        <position position="2253"/>
    </location>
    <ligand>
        <name>Zn(2+)</name>
        <dbReference type="ChEBI" id="CHEBI:29105"/>
        <label>3</label>
    </ligand>
</feature>
<feature type="binding site" evidence="31">
    <location>
        <position position="2256"/>
    </location>
    <ligand>
        <name>Zn(2+)</name>
        <dbReference type="ChEBI" id="CHEBI:29105"/>
        <label>3</label>
    </ligand>
</feature>
<feature type="binding site" evidence="31">
    <location>
        <position position="2289"/>
    </location>
    <ligand>
        <name>Zn(2+)</name>
        <dbReference type="ChEBI" id="CHEBI:29105"/>
        <label>4</label>
    </ligand>
</feature>
<feature type="binding site" evidence="31">
    <location>
        <position position="2292"/>
    </location>
    <ligand>
        <name>Zn(2+)</name>
        <dbReference type="ChEBI" id="CHEBI:29105"/>
        <label>4</label>
    </ligand>
</feature>
<feature type="binding site" evidence="31">
    <location>
        <position position="2296"/>
    </location>
    <ligand>
        <name>Zn(2+)</name>
        <dbReference type="ChEBI" id="CHEBI:29105"/>
        <label>4</label>
    </ligand>
</feature>
<feature type="binding site" evidence="31">
    <location>
        <position position="2299"/>
    </location>
    <ligand>
        <name>Zn(2+)</name>
        <dbReference type="ChEBI" id="CHEBI:29105"/>
        <label>4</label>
    </ligand>
</feature>
<feature type="binding site" evidence="19">
    <location>
        <position position="4168"/>
    </location>
    <ligand>
        <name>Zn(2+)</name>
        <dbReference type="ChEBI" id="CHEBI:29105"/>
        <label>5</label>
    </ligand>
</feature>
<feature type="binding site" evidence="19">
    <location>
        <position position="4171"/>
    </location>
    <ligand>
        <name>Zn(2+)</name>
        <dbReference type="ChEBI" id="CHEBI:29105"/>
        <label>5</label>
    </ligand>
</feature>
<feature type="binding site" evidence="19">
    <location>
        <position position="4177"/>
    </location>
    <ligand>
        <name>Zn(2+)</name>
        <dbReference type="ChEBI" id="CHEBI:29105"/>
        <label>5</label>
    </ligand>
</feature>
<feature type="binding site" evidence="19">
    <location>
        <position position="4184"/>
    </location>
    <ligand>
        <name>Zn(2+)</name>
        <dbReference type="ChEBI" id="CHEBI:29105"/>
        <label>5</label>
    </ligand>
</feature>
<feature type="binding site" evidence="19">
    <location>
        <position position="4211"/>
    </location>
    <ligand>
        <name>Zn(2+)</name>
        <dbReference type="ChEBI" id="CHEBI:29105"/>
        <label>6</label>
    </ligand>
</feature>
<feature type="binding site" evidence="19">
    <location>
        <position position="4214"/>
    </location>
    <ligand>
        <name>Zn(2+)</name>
        <dbReference type="ChEBI" id="CHEBI:29105"/>
        <label>6</label>
    </ligand>
</feature>
<feature type="binding site" evidence="19">
    <location>
        <position position="4222"/>
    </location>
    <ligand>
        <name>Zn(2+)</name>
        <dbReference type="ChEBI" id="CHEBI:29105"/>
        <label>6</label>
    </ligand>
</feature>
<feature type="binding site" evidence="19">
    <location>
        <position position="4224"/>
    </location>
    <ligand>
        <name>Zn(2+)</name>
        <dbReference type="ChEBI" id="CHEBI:29105"/>
        <label>6</label>
    </ligand>
</feature>
<feature type="binding site" evidence="3">
    <location>
        <position position="4442"/>
    </location>
    <ligand>
        <name>Mn(2+)</name>
        <dbReference type="ChEBI" id="CHEBI:29035"/>
    </ligand>
</feature>
<feature type="binding site" evidence="3">
    <location>
        <position position="4451"/>
    </location>
    <ligand>
        <name>Mn(2+)</name>
        <dbReference type="ChEBI" id="CHEBI:29035"/>
    </ligand>
</feature>
<feature type="binding site" evidence="34">
    <location>
        <position position="4528"/>
    </location>
    <ligand>
        <name>Zn(2+)</name>
        <dbReference type="ChEBI" id="CHEBI:29105"/>
        <label>7</label>
    </ligand>
</feature>
<feature type="binding site" evidence="34">
    <location>
        <position position="4534"/>
    </location>
    <ligand>
        <name>Zn(2+)</name>
        <dbReference type="ChEBI" id="CHEBI:29105"/>
        <label>7</label>
    </ligand>
</feature>
<feature type="binding site" evidence="34">
    <location>
        <position position="4539"/>
    </location>
    <ligand>
        <name>Zn(2+)</name>
        <dbReference type="ChEBI" id="CHEBI:29105"/>
        <label>7</label>
    </ligand>
</feature>
<feature type="binding site" evidence="34">
    <location>
        <position position="4543"/>
    </location>
    <ligand>
        <name>Zn(2+)</name>
        <dbReference type="ChEBI" id="CHEBI:29105"/>
        <label>7</label>
    </ligand>
</feature>
<feature type="binding site" evidence="15">
    <location>
        <position position="4720"/>
    </location>
    <ligand>
        <name>Zn(2+)</name>
        <dbReference type="ChEBI" id="CHEBI:29105"/>
        <label>8</label>
    </ligand>
</feature>
<feature type="binding site" evidence="15">
    <location>
        <position position="4875"/>
    </location>
    <ligand>
        <name>Zn(2+)</name>
        <dbReference type="ChEBI" id="CHEBI:29105"/>
        <label>8</label>
    </ligand>
</feature>
<feature type="binding site" evidence="15">
    <location>
        <position position="4878"/>
    </location>
    <ligand>
        <name>Zn(2+)</name>
        <dbReference type="ChEBI" id="CHEBI:29105"/>
        <label>8</label>
    </ligand>
</feature>
<feature type="binding site" evidence="15">
    <location>
        <position position="4879"/>
    </location>
    <ligand>
        <name>Zn(2+)</name>
        <dbReference type="ChEBI" id="CHEBI:29105"/>
        <label>8</label>
    </ligand>
</feature>
<feature type="binding site" evidence="10">
    <location>
        <position position="5170"/>
    </location>
    <ligand>
        <name>Zn(2+)</name>
        <dbReference type="ChEBI" id="CHEBI:29105"/>
        <label>9</label>
    </ligand>
</feature>
<feature type="binding site" evidence="10">
    <location>
        <position position="5173"/>
    </location>
    <ligand>
        <name>Zn(2+)</name>
        <dbReference type="ChEBI" id="CHEBI:29105"/>
        <label>9</label>
    </ligand>
</feature>
<feature type="binding site" evidence="10">
    <location>
        <position position="5181"/>
    </location>
    <ligand>
        <name>Zn(2+)</name>
        <dbReference type="ChEBI" id="CHEBI:29105"/>
        <label>10</label>
    </ligand>
</feature>
<feature type="binding site" evidence="10">
    <location>
        <position position="5184"/>
    </location>
    <ligand>
        <name>Zn(2+)</name>
        <dbReference type="ChEBI" id="CHEBI:29105"/>
        <label>10</label>
    </ligand>
</feature>
<feature type="binding site" evidence="10">
    <location>
        <position position="5191"/>
    </location>
    <ligand>
        <name>Zn(2+)</name>
        <dbReference type="ChEBI" id="CHEBI:29105"/>
        <label>9</label>
    </ligand>
</feature>
<feature type="binding site" evidence="10">
    <location>
        <position position="5194"/>
    </location>
    <ligand>
        <name>Zn(2+)</name>
        <dbReference type="ChEBI" id="CHEBI:29105"/>
        <label>9</label>
    </ligand>
</feature>
<feature type="binding site" evidence="10">
    <location>
        <position position="5198"/>
    </location>
    <ligand>
        <name>Zn(2+)</name>
        <dbReference type="ChEBI" id="CHEBI:29105"/>
        <label>10</label>
    </ligand>
</feature>
<feature type="binding site" evidence="10">
    <location>
        <position position="5204"/>
    </location>
    <ligand>
        <name>Zn(2+)</name>
        <dbReference type="ChEBI" id="CHEBI:29105"/>
        <label>10</label>
    </ligand>
</feature>
<feature type="binding site" evidence="10">
    <location>
        <position position="5215"/>
    </location>
    <ligand>
        <name>Zn(2+)</name>
        <dbReference type="ChEBI" id="CHEBI:29105"/>
        <label>11</label>
    </ligand>
</feature>
<feature type="binding site" evidence="10">
    <location>
        <position position="5220"/>
    </location>
    <ligand>
        <name>Zn(2+)</name>
        <dbReference type="ChEBI" id="CHEBI:29105"/>
        <label>11</label>
    </ligand>
</feature>
<feature type="binding site" evidence="10">
    <location>
        <position position="5237"/>
    </location>
    <ligand>
        <name>Zn(2+)</name>
        <dbReference type="ChEBI" id="CHEBI:29105"/>
        <label>11</label>
    </ligand>
</feature>
<feature type="binding site" evidence="10">
    <location>
        <position position="5240"/>
    </location>
    <ligand>
        <name>Zn(2+)</name>
        <dbReference type="ChEBI" id="CHEBI:29105"/>
        <label>11</label>
    </ligand>
</feature>
<feature type="binding site" evidence="4">
    <location>
        <begin position="5447"/>
        <end position="5454"/>
    </location>
    <ligand>
        <name>ATP</name>
        <dbReference type="ChEBI" id="CHEBI:30616"/>
    </ligand>
</feature>
<feature type="binding site" evidence="20">
    <location>
        <position position="5973"/>
    </location>
    <ligand>
        <name>Zn(2+)</name>
        <dbReference type="ChEBI" id="CHEBI:29105"/>
        <label>12</label>
    </ligand>
</feature>
<feature type="binding site" evidence="20">
    <location>
        <position position="5976"/>
    </location>
    <ligand>
        <name>Zn(2+)</name>
        <dbReference type="ChEBI" id="CHEBI:29105"/>
        <label>12</label>
    </ligand>
</feature>
<feature type="binding site" evidence="20">
    <location>
        <position position="5992"/>
    </location>
    <ligand>
        <name>Zn(2+)</name>
        <dbReference type="ChEBI" id="CHEBI:29105"/>
        <label>12</label>
    </ligand>
</feature>
<feature type="binding site" evidence="20">
    <location>
        <position position="5995"/>
    </location>
    <ligand>
        <name>Zn(2+)</name>
        <dbReference type="ChEBI" id="CHEBI:29105"/>
        <label>12</label>
    </ligand>
</feature>
<feature type="binding site" evidence="20">
    <location>
        <position position="6026"/>
    </location>
    <ligand>
        <name>Zn(2+)</name>
        <dbReference type="ChEBI" id="CHEBI:29105"/>
        <label>13</label>
    </ligand>
</feature>
<feature type="binding site" evidence="20">
    <location>
        <position position="6030"/>
    </location>
    <ligand>
        <name>Zn(2+)</name>
        <dbReference type="ChEBI" id="CHEBI:29105"/>
        <label>13</label>
    </ligand>
</feature>
<feature type="binding site" evidence="20">
    <location>
        <position position="6033"/>
    </location>
    <ligand>
        <name>Zn(2+)</name>
        <dbReference type="ChEBI" id="CHEBI:29105"/>
        <label>13</label>
    </ligand>
</feature>
<feature type="binding site" evidence="20">
    <location>
        <position position="6048"/>
    </location>
    <ligand>
        <name>Zn(2+)</name>
        <dbReference type="ChEBI" id="CHEBI:29105"/>
        <label>13</label>
    </ligand>
</feature>
<feature type="binding site" evidence="21">
    <location>
        <begin position="6100"/>
        <end position="6106"/>
    </location>
    <ligand>
        <name>S-adenosyl-L-methionine</name>
        <dbReference type="ChEBI" id="CHEBI:59789"/>
    </ligand>
</feature>
<feature type="binding site" evidence="21">
    <location>
        <position position="6218"/>
    </location>
    <ligand>
        <name>Zn(2+)</name>
        <dbReference type="ChEBI" id="CHEBI:29105"/>
        <label>14</label>
    </ligand>
</feature>
<feature type="binding site" evidence="21">
    <location>
        <position position="6242"/>
    </location>
    <ligand>
        <name>Zn(2+)</name>
        <dbReference type="ChEBI" id="CHEBI:29105"/>
        <label>14</label>
    </ligand>
</feature>
<feature type="binding site" evidence="21">
    <location>
        <position position="6253"/>
    </location>
    <ligand>
        <name>Zn(2+)</name>
        <dbReference type="ChEBI" id="CHEBI:29105"/>
        <label>14</label>
    </ligand>
</feature>
<feature type="binding site" evidence="21">
    <location>
        <position position="6256"/>
    </location>
    <ligand>
        <name>Zn(2+)</name>
        <dbReference type="ChEBI" id="CHEBI:29105"/>
        <label>14</label>
    </ligand>
</feature>
<feature type="site" description="Cleavage" evidence="4">
    <location>
        <begin position="175"/>
        <end position="176"/>
    </location>
</feature>
<feature type="site" description="Cleavage; by PL-PRO" evidence="4">
    <location>
        <begin position="772"/>
        <end position="773"/>
    </location>
</feature>
<feature type="site" description="Cleavage; by PL-PRO" evidence="4">
    <location>
        <begin position="2609"/>
        <end position="2610"/>
    </location>
</feature>
<feature type="site" description="Cleavage; by 3CL-PRO" evidence="4">
    <location>
        <begin position="3103"/>
        <end position="3104"/>
    </location>
</feature>
<feature type="site" description="Cleavage; by 3CL-PRO" evidence="4">
    <location>
        <begin position="3409"/>
        <end position="3410"/>
    </location>
</feature>
<feature type="site" description="Cleavage; by 3CL-PRO" evidence="4">
    <location>
        <begin position="3699"/>
        <end position="3700"/>
    </location>
</feature>
<feature type="site" description="Cleavage; by 3CL-PRO" evidence="4">
    <location>
        <begin position="3782"/>
        <end position="3783"/>
    </location>
</feature>
<feature type="site" description="Cleavage; by 3CL-PRO" evidence="4">
    <location>
        <begin position="3982"/>
        <end position="3983"/>
    </location>
</feature>
<feature type="site" description="Cleavage; by 3CL-PRO" evidence="4">
    <location>
        <begin position="4094"/>
        <end position="4095"/>
    </location>
</feature>
<feature type="site" description="Cleavage; by 3CL-PRO" evidence="4">
    <location>
        <begin position="4233"/>
        <end position="4234"/>
    </location>
</feature>
<feature type="site" description="Cleavage; by 3CL-PRO" evidence="4">
    <location>
        <begin position="5165"/>
        <end position="5166"/>
    </location>
</feature>
<feature type="site" description="Cleavage; by 3CL-PRO" evidence="4">
    <location>
        <begin position="5766"/>
        <end position="5767"/>
    </location>
</feature>
<feature type="site" description="Cleavage; by 3CL-PRO" evidence="4">
    <location>
        <begin position="6296"/>
        <end position="6297"/>
    </location>
</feature>
<feature type="site" description="Cleavage; by 3CL-PRO" evidence="4">
    <location>
        <begin position="6633"/>
        <end position="6634"/>
    </location>
</feature>
<feature type="disulfide bond" evidence="32">
    <location>
        <begin position="2121"/>
        <end position="2138"/>
    </location>
</feature>
<feature type="helix" evidence="38">
    <location>
        <begin position="1346"/>
        <end position="1355"/>
    </location>
</feature>
<feature type="strand" evidence="38">
    <location>
        <begin position="1360"/>
        <end position="1364"/>
    </location>
</feature>
<feature type="strand" evidence="38">
    <location>
        <begin position="1368"/>
        <end position="1371"/>
    </location>
</feature>
<feature type="strand" evidence="38">
    <location>
        <begin position="1374"/>
        <end position="1382"/>
    </location>
</feature>
<feature type="strand" evidence="38">
    <location>
        <begin position="1385"/>
        <end position="1389"/>
    </location>
</feature>
<feature type="strand" evidence="38">
    <location>
        <begin position="1394"/>
        <end position="1398"/>
    </location>
</feature>
<feature type="strand" evidence="38">
    <location>
        <begin position="1401"/>
        <end position="1404"/>
    </location>
</feature>
<feature type="strand" evidence="38">
    <location>
        <begin position="1406"/>
        <end position="1408"/>
    </location>
</feature>
<feature type="helix" evidence="38">
    <location>
        <begin position="1409"/>
        <end position="1415"/>
    </location>
</feature>
<evidence type="ECO:0000250" key="1"/>
<evidence type="ECO:0000250" key="2">
    <source>
        <dbReference type="UniProtKB" id="P0C6X7"/>
    </source>
</evidence>
<evidence type="ECO:0000250" key="3">
    <source>
        <dbReference type="UniProtKB" id="P0DTD1"/>
    </source>
</evidence>
<evidence type="ECO:0000255" key="4"/>
<evidence type="ECO:0000255" key="5">
    <source>
        <dbReference type="PROSITE-ProRule" id="PRU00214"/>
    </source>
</evidence>
<evidence type="ECO:0000255" key="6">
    <source>
        <dbReference type="PROSITE-ProRule" id="PRU00444"/>
    </source>
</evidence>
<evidence type="ECO:0000255" key="7">
    <source>
        <dbReference type="PROSITE-ProRule" id="PRU00490"/>
    </source>
</evidence>
<evidence type="ECO:0000255" key="8">
    <source>
        <dbReference type="PROSITE-ProRule" id="PRU00539"/>
    </source>
</evidence>
<evidence type="ECO:0000255" key="9">
    <source>
        <dbReference type="PROSITE-ProRule" id="PRU00772"/>
    </source>
</evidence>
<evidence type="ECO:0000255" key="10">
    <source>
        <dbReference type="PROSITE-ProRule" id="PRU00986"/>
    </source>
</evidence>
<evidence type="ECO:0000255" key="11">
    <source>
        <dbReference type="PROSITE-ProRule" id="PRU01289"/>
    </source>
</evidence>
<evidence type="ECO:0000255" key="12">
    <source>
        <dbReference type="PROSITE-ProRule" id="PRU01290"/>
    </source>
</evidence>
<evidence type="ECO:0000255" key="13">
    <source>
        <dbReference type="PROSITE-ProRule" id="PRU01291"/>
    </source>
</evidence>
<evidence type="ECO:0000255" key="14">
    <source>
        <dbReference type="PROSITE-ProRule" id="PRU01292"/>
    </source>
</evidence>
<evidence type="ECO:0000255" key="15">
    <source>
        <dbReference type="PROSITE-ProRule" id="PRU01293"/>
    </source>
</evidence>
<evidence type="ECO:0000255" key="16">
    <source>
        <dbReference type="PROSITE-ProRule" id="PRU01294"/>
    </source>
</evidence>
<evidence type="ECO:0000255" key="17">
    <source>
        <dbReference type="PROSITE-ProRule" id="PRU01295"/>
    </source>
</evidence>
<evidence type="ECO:0000255" key="18">
    <source>
        <dbReference type="PROSITE-ProRule" id="PRU01296"/>
    </source>
</evidence>
<evidence type="ECO:0000255" key="19">
    <source>
        <dbReference type="PROSITE-ProRule" id="PRU01297"/>
    </source>
</evidence>
<evidence type="ECO:0000255" key="20">
    <source>
        <dbReference type="PROSITE-ProRule" id="PRU01298"/>
    </source>
</evidence>
<evidence type="ECO:0000255" key="21">
    <source>
        <dbReference type="PROSITE-ProRule" id="PRU01299"/>
    </source>
</evidence>
<evidence type="ECO:0000255" key="22">
    <source>
        <dbReference type="PROSITE-ProRule" id="PRU01300"/>
    </source>
</evidence>
<evidence type="ECO:0000255" key="23">
    <source>
        <dbReference type="PROSITE-ProRule" id="PRU01303"/>
    </source>
</evidence>
<evidence type="ECO:0000255" key="24">
    <source>
        <dbReference type="PROSITE-ProRule" id="PRU01305"/>
    </source>
</evidence>
<evidence type="ECO:0000255" key="25">
    <source>
        <dbReference type="PROSITE-ProRule" id="PRU01306"/>
    </source>
</evidence>
<evidence type="ECO:0000255" key="26">
    <source>
        <dbReference type="PROSITE-ProRule" id="PRU01307"/>
    </source>
</evidence>
<evidence type="ECO:0000255" key="27">
    <source>
        <dbReference type="PROSITE-ProRule" id="PRU01308"/>
    </source>
</evidence>
<evidence type="ECO:0000255" key="28">
    <source>
        <dbReference type="PROSITE-ProRule" id="PRU01333"/>
    </source>
</evidence>
<evidence type="ECO:0000255" key="29">
    <source>
        <dbReference type="PROSITE-ProRule" id="PRU01334"/>
    </source>
</evidence>
<evidence type="ECO:0000255" key="30">
    <source>
        <dbReference type="PROSITE-ProRule" id="PRU01335"/>
    </source>
</evidence>
<evidence type="ECO:0000255" key="31">
    <source>
        <dbReference type="PROSITE-ProRule" id="PRU01336"/>
    </source>
</evidence>
<evidence type="ECO:0000255" key="32">
    <source>
        <dbReference type="PROSITE-ProRule" id="PRU01337"/>
    </source>
</evidence>
<evidence type="ECO:0000255" key="33">
    <source>
        <dbReference type="PROSITE-ProRule" id="PRU01338"/>
    </source>
</evidence>
<evidence type="ECO:0000255" key="34">
    <source>
        <dbReference type="PROSITE-ProRule" id="PRU01344"/>
    </source>
</evidence>
<evidence type="ECO:0000256" key="35">
    <source>
        <dbReference type="SAM" id="MobiDB-lite"/>
    </source>
</evidence>
<evidence type="ECO:0000269" key="36">
    <source>
    </source>
</evidence>
<evidence type="ECO:0000305" key="37"/>
<evidence type="ECO:0007829" key="38">
    <source>
        <dbReference type="PDB" id="5UTV"/>
    </source>
</evidence>
<protein>
    <recommendedName>
        <fullName>Replicase polyprotein 1ab</fullName>
        <shortName>pp1ab</shortName>
    </recommendedName>
    <alternativeName>
        <fullName>ORF1ab polyprotein</fullName>
    </alternativeName>
    <component>
        <recommendedName>
            <fullName>Host translation inhibitor nsp1</fullName>
            <shortName>nsp1</shortName>
        </recommendedName>
        <alternativeName>
            <fullName>Leader protein</fullName>
        </alternativeName>
    </component>
    <component>
        <recommendedName>
            <fullName>Non-structural protein 2</fullName>
            <shortName>nsp2</shortName>
        </recommendedName>
        <alternativeName>
            <fullName>p65 homolog</fullName>
        </alternativeName>
    </component>
    <component>
        <recommendedName>
            <fullName>Papain-like proteinase nsp3</fullName>
            <shortName>PL-PRO</shortName>
            <ecNumber>3.4.19.12</ecNumber>
            <ecNumber>3.4.22.-</ecNumber>
        </recommendedName>
        <alternativeName>
            <fullName>Non-structural protein 3</fullName>
            <shortName>nsp3</shortName>
        </alternativeName>
    </component>
    <component>
        <recommendedName>
            <fullName>Non-structural protein 4</fullName>
            <shortName>nsp4</shortName>
        </recommendedName>
    </component>
    <component>
        <recommendedName>
            <fullName>3C-like proteinase nsp5</fullName>
            <shortName>3CL-PRO</shortName>
            <shortName>3CLp</shortName>
            <ecNumber>3.4.22.-</ecNumber>
        </recommendedName>
        <alternativeName>
            <fullName>nsp5</fullName>
        </alternativeName>
    </component>
    <component>
        <recommendedName>
            <fullName>Non-structural protein 6</fullName>
            <shortName>nsp6</shortName>
        </recommendedName>
    </component>
    <component>
        <recommendedName>
            <fullName>Non-structural protein 7</fullName>
            <shortName>nsp7</shortName>
        </recommendedName>
    </component>
    <component>
        <recommendedName>
            <fullName>Non-structural protein 8</fullName>
            <shortName>nsp8</shortName>
        </recommendedName>
    </component>
    <component>
        <recommendedName>
            <fullName>Viral protein genome-linked nsp9</fullName>
        </recommendedName>
        <alternativeName>
            <fullName>Non-structural protein 9</fullName>
            <shortName>nsp9</shortName>
        </alternativeName>
        <alternativeName>
            <fullName>RNA-capping enzyme subunit nsp9</fullName>
        </alternativeName>
    </component>
    <component>
        <recommendedName>
            <fullName>Non-structural protein 10</fullName>
            <shortName>nsp10</shortName>
        </recommendedName>
        <alternativeName>
            <fullName>Growth factor-like peptide</fullName>
            <shortName>GFL</shortName>
        </alternativeName>
    </component>
    <component>
        <recommendedName>
            <fullName>RNA-directed RNA polymerase nsp12</fullName>
            <shortName>Pol</shortName>
            <shortName>RdRp</shortName>
            <ecNumber>2.7.7.48</ecNumber>
            <ecNumber>2.7.7.50</ecNumber>
        </recommendedName>
        <alternativeName>
            <fullName>nsp12</fullName>
        </alternativeName>
    </component>
    <component>
        <recommendedName>
            <fullName>Helicase nsp13</fullName>
            <shortName>Hel</shortName>
            <ecNumber>3.6.4.12</ecNumber>
            <ecNumber>3.6.4.13</ecNumber>
        </recommendedName>
        <alternativeName>
            <fullName>nsp13</fullName>
        </alternativeName>
    </component>
    <component>
        <recommendedName>
            <fullName>Guanine-N7 methyltransferase nsp14</fullName>
            <shortName>ExoN</shortName>
            <ecNumber>2.1.1.56</ecNumber>
            <ecNumber>3.1.13.-</ecNumber>
        </recommendedName>
        <alternativeName>
            <fullName>nsp14</fullName>
        </alternativeName>
    </component>
    <component>
        <recommendedName>
            <fullName>Uridylate-specific endoribonuclease nsp15</fullName>
            <ecNumber>4.6.1.-</ecNumber>
        </recommendedName>
        <alternativeName>
            <fullName>NendoU</fullName>
        </alternativeName>
        <alternativeName>
            <fullName>nsp15</fullName>
        </alternativeName>
    </component>
    <component>
        <recommendedName>
            <fullName>2'-O-methyltransferase nsp16</fullName>
            <ecNumber>2.1.1.57</ecNumber>
        </recommendedName>
        <alternativeName>
            <fullName>nsp16</fullName>
        </alternativeName>
    </component>
</protein>
<sequence>MEGVPDPPKLKSMVVTTLKWCDPFANPNVTGWDIPIEEALEYAKQQLRTPEPQLVFVPYYLSHAPGISGDRVVITDSIWYATNFGWQPIRELAMDKDGVRYGRGGTHGVLLPMQDPSFIMGDIDIQIRKYGIGANSPPDVLPLWDGFSDPGPDVGPYLDFPDNCCPTKPKAKRGGDVYLSDQYGFDNNGILVEPVMKLLGVIKSDFTLEQLLAALGKYRTEDGYDLPDGYVKVAIKVGRKAVPVLKQSIFTVVGVTEQLVPGYYYPFSTSSVVEHTKPTRGGPVGKTVEAVMLSLYGTNNYNPATPVARLKCSYCDYYGWTPLKDIGTVNCLCGAEFQLTSSCVDAESAGVIKPGCVMLLDKSPGMRLIPGNRTYVSFGGAIWSPIGKVNGVTVWVPRAYSIVAGEHSGAVGSGDTVAINKELVEYLIEGIRVDADTLDNPTCATFIANLDCDTKAPVVHTVESLQGLCLANKIMLGDKPLPTDEFHPFIVGLAYHVQRACWYGALASRTFEAFRDFVRTEEERFAQFFGKVCAPINGCVYLAYTTGRVTLFSAYQVLNTAIAKSKDAFGGVAAIVVDMLKPILEWVLKKMSIAKGAWLPYAEGLLALFKAQFTVVKGKFQFLRASLNSKCHSLCDLLTTIMSKLLTSVKWAGCKVDALYTGTYYYFSRKGVLTEVQLCAKRLGLLLTPKQQKMEVEVLDGDFDAPVTLTDLELEECTGVLEEVFGASDVKLVKGTLVSLASKLFVRTEDGFLYRYVKSGGVLGKAFRLRGGGVSKVTFGDEEVHTIPNTVTVNFSYDVCEGLDAILDKVMAPFQVEEGTKLEDLACVVQKAVYERLSDLFSDCPAELRPINLEDFLTSECFVYSKDYEKILMPEMYFSLEDAVPVDDEMVDDIEDTVEQASDSDDQWLGDEGAEDCDNTIQDVDVATSMTTPCGYTKIAEHVYIKCADIVQEARNYSYAVLVNAANVNLHHGGGVAGALNRATNNAMQKESSEYIKANGSLQPGGHVLLSSHGLASHGILHVVGPDKRLGQDLALLDAVYAAYTGFDSVLTPLVSAGIFGFTVEESLCSLVKNVACTTYVVVYDRQLYERALATSFDVPGPQSSVQHVPAIDWAEAVEVQESIVDQVETPSLGAVDTVDSNADSGLNETARSPENVVGSVPDDVVADVESCVRDLVRQVVKKVKRDKRPPPIVPQQTVEQQPQEISSPGDCNTVLVDVVSMSFSAMVNFGKEKGLLIPVVIDYPAFLKVLKRFSPKEGLFSSNGYEFYGYSRDKPLHEVSKDLNSLGRPLIMIPFGFIVNGQTLAVSAVSMRGLTVPHTVVVPSESSVPLYRAYFNGVFSGDTTAVQDFVVDILLNGARDWDVLQTTCTVDRKVYKTICKRGNTYLCFDDTNLYAITGDVVLKFATVSKARAYLETKLCAPEPLIKVLTTVDGINYSTVLVSTAQSYRAQIGTVFCDGHDWSNKNPMPTDEGTHLYKQDNFSSAEVTAIREYYGVDDSNIIARAMSIRKTVQTWPYTVVDGRVLLAQRDSNCYLNVAISLLQDIDVSFSTPWVCRAYDALKGGNPLPMAEVLIALGKATPGVSDDAHMVLSAVLNHGTVTARRVMQTVCEHCGVSQMVFTGTDACTFYGSVVLDDLYAPVSVVCQCGRPAIRYVSEQKSPWLLMSCTPTQVPLDTSGIWKTAIVFRGPVTAGHYMYAVNGTLISVYDANTRRRTSDLKLPATDILYGPTSFTSDSKVETYYLDGVKRTTIDPDFSKYVKRGDYYFTTAPIEVVAAPKLVTSYDGFYLSSCQNPQLAESFNKAINATKTGPMKLLTMYPNVAGDVVAISDDNVVAHPYGSLHMGKPVLFVTRPNTWKKLVPLLSTVVVNTPNTYDVLAVDPLPVNNETSEEPISVKAPIPLYGLKATMVLNGTTYVPGNKGHLLCLKEFTLTDLQTFYVEGVQPFVLLKASHLSKVLGLRVSDSSLHVNHLSKGVVYAYAATRLTTRVTTSLLGGLVTRSVRKTADFVRSTNPGSKCVGLLCLFYQLFMRFWLLVKKPPIVKVSGIIAYNTGCGVTTCVLNYLRSRCGNISWSRLLKLLRYMLYIWFVWTCLTICGVWLSEPYAPSLVTRFKYFLGIVMPCDYVLVNETGTGWLHHLCMAGMDSLDYPALRMQQHRYGSPYNYTYILMLLEAFFAYLLYTPALPIVGILAVLHLIVLYLPIPLGNSWLVVFLYYIIRLVPFTSMLRMYIVIAFLWLCYKGFLHVRYGCNNVACLMCYKKNVAKRIECSTVVNGVKRMFYVNANGGTHFCTKHNWNCVSCDTYTVDSTFICRQVALDLSAQFKRPIIHTDEAYYEVTSVEVRNGYVYCYFESDGQRSYERFPMDAFTNVSKLHYSELKGAAPAFNVLVFDATNRIEENAVKTAAIYYAQLACKPILLVDKRMVGVVGDDATIARAMFEAYAQNYLLKYSIAMDKVKHLYSTALQQISSGMTVESVLKVFVGSTRAEAKDLESDVDTNDLVSCIRLCHQEGWEWTTDSWNNLVPTYIKQDTLSTLEVGQFMTANAKYVNANIAKGAAVNLIWRYADFIKLSESMRRQLKVAARKTGLNLLVTTSSLKADVPCMVTPFKIIGGHRRIVSWRRVLIHVFMLLVVLNPQWFTPWYIMRPIEYNVVDFKVIDNAVIRDITSADQCFANKFSAFENWYSNRYGSYVNSRGCPMVVGVVSDIVGSLVPGLPARFLRVGTTLLPLVNYGLGAVGSVCYTPHYAINYDVFDTSACVLAATCTLFSSASGERMPYCADAALIQNASRYDMLKPHVMYPFYEHSGYIRFPEVISAGVHIVRTMAMEYCKVGRCDVSEAGLCMSLQPRWVVNNAYFRQQSGVYCGTSAFDLFMNMLLPIFTPVGAVDITTSILMGALLAVVVSMSLYYLLRFRRAFGDYSGVIFTNILAFVLNVIVLCLEGPYPMLPSIYAMVFLYATCYFGSDIACMMHVSFLIMFAGVVPLWVTVLYIVVVLSRHILWFASLCTKRTVQVGDLAFHSFQDAALQTFMLDKEVFLRLKREISSDAYFKYLAMYNKYKYYSGPMDTAAYREAACSHLVMALEKYSNGGGDTIYQPPRCSVASAALQAGLTRMAHPSGLVEPCLVKVNYGSMTLNGIWLDNFVICPRHVMCSRDELANPDYPRLSMRAANYDFHVSQNGHNIRVIGHTMEGSLLKLTVDVNNPKTPAYSFIRVSTGQAMSLLACYDGLPTGVYTCTLRSNGTMRASFLCGSCGSPGFVMNGKEVQFCYLHQLELPNGTHTGTDFSGVFYGPFEDKQVPQLAAPDCTITVNVLAWLYAAVLSGENWFLTKSSISPAEFNNCAVKYMCQSVTSESLQVLQPLAAKTGISVERMLSALKVLLSAGFCGRTIMGSCSLEDEHTPYDIGRQMLGVKLQGKFQSMFRWTLQWFAIIFVLTILILLQLAQWTFVGALPFTLLLPLIGFVAVCVGFVSLLIKHKHTYLTVYLLPVAMVTAYYNFQYTPEGVQGYLLSLYNYVNPGRIDVIGTDLLTMLIISVACTLLSVRMVRTDAYSRIWYVCTAVGWLYNCWTGSADTVAISYLTFMVSVFTNYTGVACASLYAAQFMVWVLKFLDPTILLLYGRFRCVLVCYLLVGYLCTCYFGVFNLINRLFRCTLGNYEYVVSSQELRYMNSHGLLPPTNSWQALMLNIKLAGIGGIPIYRVSTIQSNMTDLKCTSVVLLSVLQQLRVESSSKLWALCVKLHNEILASNSPTEAFEAFVSLLSVLLSLPGAINLDELCSSILENNSVLQAVASEFSNLSSYVDYENAQKAYDTAVATGAPASTVNALKKAMNVAKSVLDKDVATTRKLERMSELAMTAMYKQARAEDRRSKVTAAMQTMLFNMIRRLDSDALSNILNNARNGVVPLGVIPRTAANKLLLVVPDFSVYTATITMPTLTYAGSAWDVMQVADADGKTVNATDITRENSVNLAWPLVVTAQRQQATSPVKLQNNELMPQTVKRMNVVAGVSQTACVTDAVAYYNATKEGRHVMAILADTDGLAFAKVEKSTGDGFVILELEPPCKFMVDTPKGPALKYLYFTKGLKNLCRGTVLGTLACTVRLHAGSATEVASNSSILSLCSFSVDPEATYKDYLDNGGSPIGNCVKMLTPHTGTGLAITAKPDANIDQESFGGASCCLYCRCHIEHPGASGVCKYKGKFVQIPLVGVNDPIGFCIRNVVCAVCNMWQGYGCPCSSLREINLQARDECFLNRVRGTSGVARLVPLGSGVQPDIVLRAFDICNTKVAGFGLHLKNNCCRYQELDADGTQLDSYFVVKRHTESNYLLEQRCYEKLKDCGVVARHDFFKFNIEGVMTPHVSRERLTKYTMADLVYSLRHFDNNNCDTLKEILVLRGCCTADYFDRKDWYDPVENPDIIRVYHNLGETVRKAVLSAVKMADSMVEQGLIGVLTLDNQDLNGQWYDFGDFIEGPAGAGVAVMDTYYSLAMPVYTMTNMLAAECHVDGDFSKPKRVWDICKYDYTQFKYSLFSKYFKYWDMQYHPNCVACADDRCILHCANFNILFSMVLPNTSFGPLVQKIYVDGVPFVVSTGYHYRELGVVMNQDIRQHAQRLSLRELLVYAADPAMHVAASNALADKRTVCMSVAAMTTGVTFQTVKPGQFNEDFYNFAVKCGFFKEGSTISFKHFFYAQDGNAAISDYDYYRYNLPTMCDIKQLLFSLEVVDKYFDCYDGGCLQASQVVVANYDKSAGFPFNKFGKARLYYESLSYADQDELFAYTKRNVLPTITQMNLKYAISAKNRARTVAGVSIASTMTNRQFHQKMLKSIAAARGASVVIGTTKFYGGWNRMLRTLCEGVENPHLMGWDYPKCDRAMPNLLRIFASLILARKHATCCNASERFYRLANECAQVLSEMVLCGGGFYVKPGGTSSGDSTTAYANSVFNICQAVSANLNTFLSIDGNKIYTTYVQELQRRLYLGIYRSNTVDNELVLDYYNYLRKHFSMMILSDDGVVCYNADYAQKGYVADIQGFKELLYFQNNVFMSESKCWVEPDITKGPHEFCSQHTMLVDMKGEQVYLPYPDPSRILGAGCFVDDLLKTDGTLMMERYVSLAIDAYPLTKHPDPEYQNVFWCYLQYIKKLHEELTGHLLDTYSVMLASDNASKYWEVEFYENMYMESATLQSVGTCVVCNSQTSLRCGGCIRRPFLCCKCCYDHVVSTTHKLVLSVTPYVCNNPSCDVADVTQLYLGGMSYYCRDHRPPISFPLCANGQVFGLYKNICTGSPDVADFNSLATCDWSNSKDYVLANTATERLKLFAAETLRATEENAKQAYASAVVKEVLSDRELVLSWETGKTRPPLNRNYVFTGFHITKNSKVQLGEYIFEKGDYGDVVNYRSSTTYKLQVGDYFVLTSHSVQPLSSPTLLPQERYTKLVGLYPAMNVPESFASNVVHYQRVGMSRYTTVQGPPGTGKSHLSIGLALYYPSAKIVYTACSHAAVDALCEKAHKNLPINRCSRIVPAKARVECFSKFKVNDVGAQYVFSTINALPETTADILVVDEVSMCTNYDLSMINARVRAKHIVYVGDPAQLPAPRTLLTKGTLAPEHFNSVCRLMVAVGPDIFLATCYRCPKEIVDTVSALVYDKKLKANKVTTGECYKCYYKGSVTHDSSSAINKPQLGLVKEFLIKNPKWQSAVFISPYNSQNSVARRMLGLQTQTVDSSQGSEFDYVIYCQTSDTAHALNVNRFNVAITRAKKGILCVMSDSTLYESLEFTPLDVNDYVKPKMQSEVTVGLFKDCAKAEPLGPAYAPTFVSVNDKFKLNESLCVHFDTTELQMPYNRLISKMGFKFDLNIPGYSKLFITREQAIREVRGWVGFDVEGAHACGPNIGTNLPLQIGFSTGVNFVVTPSGYIDTESGSRLANVVSKAPPGDQFKHLIPLMRKGEPWSVVRKRIVEMLCDTLDGVSDTVTFVTWAHGFELTTLHYFAKVGPERKCFMCPRRATLFSSVYGAYSCWSHHRHIGGADFVYNPFLVDVQQWGYVGNLQVNHDNVCDVHKGAHVASCDAIMTRCLAIHDCFCGEVNWDVEYPIIANELAINRACRSVQRVVLKAAVKALHIETIYDIGNPKAIKVYGVNVNNWNFYDTNPVVEGVKQLHYVYDVHRDQFKDGLAMFWNCNVDCYPHNALVCRFDTRVLSKLNLAGCNGGSLYVNQHAFHTDAFNKNAFVNLKPLPFFYYSDTACENATGVSTNYVSEVDYVPLKSNVCITRCNLGGAVCKKHADEYRNFLESYNTMVSAGFTLWVDKTFDVFNLWSTFVKLQSLENVAYNVLKSGHFTAVAGELPVAILNDRLYIKEDGADKLLFTNNTCLPTNVAFELWAKRSVNVVPEVKLLRNLGVTCTYNLVIWDYESNAPLVPNTVGICTYTDLTKLDDQVVLVDGRQLDAYSKFCQLKNAIYFSPSKPKCVCTRGPTHASINGVVVEAPDRGTAFWYAMRKDGAFVQPTDGYFTQSRTVDDFQPRTQLEIDFLDLEQSCFLDKYDLHDLGLEHIVYGQFDGTIGGLHLLIGAVRRKRTAHLVMETVLGTDTVTSYAVIDQPTASSKQVCSVVDIILDDFIALIKAQDRSVVSKVVQCCLDFKVFRFMLWCKGGKISTFYPQLQAKQDWKPGYSMPALYKVQNAVLEPCLLHNYGQAARLPSGTLMNVAKYTQLCQYLNTCSLAVPAKMRVMHFGAGSDKGVCPGTAVLKQWLPADAYLVDNDLCYCASDADSTYVGSCETFFSVNKWDFIFSDMYDARTKNTSGDNTSKEGFFTYLTGFIRSKLALGGSIAIKITEHSWSADLYAIMGHFNWWTCFCTSVNSSSSEAFLIGVNYIGVGALLDGWQMHANYVFWRNSTVMQLSSYSLYDLQRFPLRLKGTPVMSLKEDQLNELVLNLIRAGRLIVRDAVDIGVRGVACSGV</sequence>